<gene>
    <name evidence="43 54" type="primary">WNK1</name>
    <name evidence="44" type="synonym">HSN2</name>
    <name type="synonym">KDP</name>
    <name evidence="52" type="synonym">KIAA0344</name>
    <name evidence="54" type="synonym">PRKWNK1</name>
</gene>
<evidence type="ECO:0000250" key="1">
    <source>
        <dbReference type="UniProtKB" id="P83741"/>
    </source>
</evidence>
<evidence type="ECO:0000250" key="2">
    <source>
        <dbReference type="UniProtKB" id="Q96J92"/>
    </source>
</evidence>
<evidence type="ECO:0000250" key="3">
    <source>
        <dbReference type="UniProtKB" id="Q9JIH7"/>
    </source>
</evidence>
<evidence type="ECO:0000255" key="4">
    <source>
        <dbReference type="PROSITE-ProRule" id="PRU00159"/>
    </source>
</evidence>
<evidence type="ECO:0000256" key="5">
    <source>
        <dbReference type="SAM" id="MobiDB-lite"/>
    </source>
</evidence>
<evidence type="ECO:0000269" key="6">
    <source>
    </source>
</evidence>
<evidence type="ECO:0000269" key="7">
    <source>
    </source>
</evidence>
<evidence type="ECO:0000269" key="8">
    <source>
    </source>
</evidence>
<evidence type="ECO:0000269" key="9">
    <source>
    </source>
</evidence>
<evidence type="ECO:0000269" key="10">
    <source>
    </source>
</evidence>
<evidence type="ECO:0000269" key="11">
    <source>
    </source>
</evidence>
<evidence type="ECO:0000269" key="12">
    <source>
    </source>
</evidence>
<evidence type="ECO:0000269" key="13">
    <source>
    </source>
</evidence>
<evidence type="ECO:0000269" key="14">
    <source>
    </source>
</evidence>
<evidence type="ECO:0000269" key="15">
    <source>
    </source>
</evidence>
<evidence type="ECO:0000269" key="16">
    <source>
    </source>
</evidence>
<evidence type="ECO:0000269" key="17">
    <source>
    </source>
</evidence>
<evidence type="ECO:0000269" key="18">
    <source>
    </source>
</evidence>
<evidence type="ECO:0000269" key="19">
    <source>
    </source>
</evidence>
<evidence type="ECO:0000269" key="20">
    <source>
    </source>
</evidence>
<evidence type="ECO:0000269" key="21">
    <source>
    </source>
</evidence>
<evidence type="ECO:0000269" key="22">
    <source>
    </source>
</evidence>
<evidence type="ECO:0000269" key="23">
    <source>
    </source>
</evidence>
<evidence type="ECO:0000269" key="24">
    <source>
    </source>
</evidence>
<evidence type="ECO:0000269" key="25">
    <source>
    </source>
</evidence>
<evidence type="ECO:0000269" key="26">
    <source>
    </source>
</evidence>
<evidence type="ECO:0000269" key="27">
    <source>
    </source>
</evidence>
<evidence type="ECO:0000269" key="28">
    <source>
    </source>
</evidence>
<evidence type="ECO:0000269" key="29">
    <source>
    </source>
</evidence>
<evidence type="ECO:0000269" key="30">
    <source>
    </source>
</evidence>
<evidence type="ECO:0000269" key="31">
    <source>
    </source>
</evidence>
<evidence type="ECO:0000269" key="32">
    <source>
    </source>
</evidence>
<evidence type="ECO:0000269" key="33">
    <source>
    </source>
</evidence>
<evidence type="ECO:0000269" key="34">
    <source>
    </source>
</evidence>
<evidence type="ECO:0000269" key="35">
    <source>
    </source>
</evidence>
<evidence type="ECO:0000269" key="36">
    <source>
    </source>
</evidence>
<evidence type="ECO:0000269" key="37">
    <source>
    </source>
</evidence>
<evidence type="ECO:0000269" key="38">
    <source>
    </source>
</evidence>
<evidence type="ECO:0000269" key="39">
    <source>
    </source>
</evidence>
<evidence type="ECO:0000269" key="40">
    <source>
    </source>
</evidence>
<evidence type="ECO:0000269" key="41">
    <source>
    </source>
</evidence>
<evidence type="ECO:0000269" key="42">
    <source ref="3"/>
</evidence>
<evidence type="ECO:0000303" key="43">
    <source>
    </source>
</evidence>
<evidence type="ECO:0000303" key="44">
    <source>
    </source>
</evidence>
<evidence type="ECO:0000303" key="45">
    <source>
    </source>
</evidence>
<evidence type="ECO:0000303" key="46">
    <source>
    </source>
</evidence>
<evidence type="ECO:0000305" key="47"/>
<evidence type="ECO:0000305" key="48">
    <source>
    </source>
</evidence>
<evidence type="ECO:0000305" key="49">
    <source>
    </source>
</evidence>
<evidence type="ECO:0000305" key="50">
    <source>
    </source>
</evidence>
<evidence type="ECO:0000305" key="51">
    <source>
    </source>
</evidence>
<evidence type="ECO:0000312" key="52">
    <source>
        <dbReference type="EMBL" id="BAA20802.2"/>
    </source>
</evidence>
<evidence type="ECO:0000312" key="53">
    <source>
        <dbReference type="EMBL" id="CAC15059.1"/>
    </source>
</evidence>
<evidence type="ECO:0000312" key="54">
    <source>
        <dbReference type="HGNC" id="HGNC:14540"/>
    </source>
</evidence>
<evidence type="ECO:0007744" key="55">
    <source>
        <dbReference type="PDB" id="4PWN"/>
    </source>
</evidence>
<evidence type="ECO:0007744" key="56">
    <source>
        <dbReference type="PDB" id="5TF9"/>
    </source>
</evidence>
<evidence type="ECO:0007744" key="57">
    <source>
        <dbReference type="PDB" id="5WDY"/>
    </source>
</evidence>
<evidence type="ECO:0007744" key="58">
    <source>
        <dbReference type="PDB" id="5WE8"/>
    </source>
</evidence>
<evidence type="ECO:0007744" key="59">
    <source>
    </source>
</evidence>
<evidence type="ECO:0007744" key="60">
    <source>
    </source>
</evidence>
<evidence type="ECO:0007744" key="61">
    <source>
    </source>
</evidence>
<evidence type="ECO:0007744" key="62">
    <source>
    </source>
</evidence>
<evidence type="ECO:0007744" key="63">
    <source>
    </source>
</evidence>
<evidence type="ECO:0007744" key="64">
    <source>
    </source>
</evidence>
<evidence type="ECO:0007744" key="65">
    <source>
    </source>
</evidence>
<evidence type="ECO:0007744" key="66">
    <source>
    </source>
</evidence>
<evidence type="ECO:0007829" key="67">
    <source>
        <dbReference type="PDB" id="4PWN"/>
    </source>
</evidence>
<evidence type="ECO:0007829" key="68">
    <source>
        <dbReference type="PDB" id="5WDY"/>
    </source>
</evidence>
<evidence type="ECO:0007829" key="69">
    <source>
        <dbReference type="PDB" id="5WE8"/>
    </source>
</evidence>
<evidence type="ECO:0007829" key="70">
    <source>
        <dbReference type="PDB" id="6FBK"/>
    </source>
</evidence>
<protein>
    <recommendedName>
        <fullName evidence="47">Serine/threonine-protein kinase WNK1</fullName>
        <ecNumber evidence="6 12 14 15 17 21 36">2.7.11.1</ecNumber>
    </recommendedName>
    <alternativeName>
        <fullName>Erythrocyte 65 kDa protein</fullName>
        <shortName>p65</shortName>
    </alternativeName>
    <alternativeName>
        <fullName>Kinase deficient protein</fullName>
    </alternativeName>
    <alternativeName>
        <fullName evidence="54">Protein kinase lysine-deficient 1</fullName>
    </alternativeName>
    <alternativeName>
        <fullName evidence="43">Protein kinase with no lysine 1</fullName>
        <shortName>hWNK1</shortName>
    </alternativeName>
</protein>
<proteinExistence type="evidence at protein level"/>
<feature type="chain" id="PRO_0000086819" description="Serine/threonine-protein kinase WNK1">
    <location>
        <begin position="1"/>
        <end position="2382"/>
    </location>
</feature>
<feature type="domain" description="Protein kinase" evidence="4">
    <location>
        <begin position="221"/>
        <end position="479"/>
    </location>
</feature>
<feature type="region of interest" description="Disordered" evidence="5">
    <location>
        <begin position="1"/>
        <end position="81"/>
    </location>
</feature>
<feature type="region of interest" description="Disordered" evidence="5">
    <location>
        <begin position="95"/>
        <end position="203"/>
    </location>
</feature>
<feature type="region of interest" description="Autoinhibitory domain" evidence="3">
    <location>
        <begin position="488"/>
        <end position="555"/>
    </location>
</feature>
<feature type="region of interest" description="Disordered" evidence="5">
    <location>
        <begin position="573"/>
        <end position="779"/>
    </location>
</feature>
<feature type="region of interest" description="Interaction with KLHL3" evidence="2">
    <location>
        <begin position="628"/>
        <end position="638"/>
    </location>
</feature>
<feature type="region of interest" description="Disordered" evidence="5">
    <location>
        <begin position="1018"/>
        <end position="1041"/>
    </location>
</feature>
<feature type="region of interest" description="Disordered" evidence="5">
    <location>
        <begin position="1053"/>
        <end position="1119"/>
    </location>
</feature>
<feature type="region of interest" description="Disordered" evidence="5">
    <location>
        <begin position="1457"/>
        <end position="1476"/>
    </location>
</feature>
<feature type="region of interest" description="Disordered" evidence="5">
    <location>
        <begin position="1733"/>
        <end position="1790"/>
    </location>
</feature>
<feature type="region of interest" description="Disordered" evidence="5">
    <location>
        <begin position="1866"/>
        <end position="1948"/>
    </location>
</feature>
<feature type="region of interest" description="Disordered" evidence="5">
    <location>
        <begin position="1994"/>
        <end position="2069"/>
    </location>
</feature>
<feature type="region of interest" description="Disordered" evidence="5">
    <location>
        <begin position="2101"/>
        <end position="2196"/>
    </location>
</feature>
<feature type="region of interest" description="Amphipathic alpha-helix" evidence="37">
    <location>
        <begin position="2241"/>
        <end position="2261"/>
    </location>
</feature>
<feature type="region of interest" description="Disordered" evidence="5">
    <location>
        <begin position="2332"/>
        <end position="2352"/>
    </location>
</feature>
<feature type="short sequence motif" description="RFXV motif 1" evidence="14">
    <location>
        <begin position="1257"/>
        <end position="1260"/>
    </location>
</feature>
<feature type="short sequence motif" description="RFXV motif 2" evidence="14">
    <location>
        <begin position="1859"/>
        <end position="1862"/>
    </location>
</feature>
<feature type="short sequence motif" description="RFXV motif 3" evidence="14">
    <location>
        <begin position="1945"/>
        <end position="1948"/>
    </location>
</feature>
<feature type="short sequence motif" description="RFXV motif 4" evidence="14">
    <location>
        <begin position="1957"/>
        <end position="1960"/>
    </location>
</feature>
<feature type="compositionally biased region" description="Basic and acidic residues" evidence="5">
    <location>
        <begin position="50"/>
        <end position="66"/>
    </location>
</feature>
<feature type="compositionally biased region" description="Low complexity" evidence="5">
    <location>
        <begin position="95"/>
        <end position="108"/>
    </location>
</feature>
<feature type="compositionally biased region" description="Low complexity" evidence="5">
    <location>
        <begin position="125"/>
        <end position="153"/>
    </location>
</feature>
<feature type="compositionally biased region" description="Basic and acidic residues" evidence="5">
    <location>
        <begin position="573"/>
        <end position="588"/>
    </location>
</feature>
<feature type="compositionally biased region" description="Polar residues" evidence="5">
    <location>
        <begin position="598"/>
        <end position="614"/>
    </location>
</feature>
<feature type="compositionally biased region" description="Low complexity" evidence="5">
    <location>
        <begin position="615"/>
        <end position="625"/>
    </location>
</feature>
<feature type="compositionally biased region" description="Polar residues" evidence="5">
    <location>
        <begin position="637"/>
        <end position="689"/>
    </location>
</feature>
<feature type="compositionally biased region" description="Low complexity" evidence="5">
    <location>
        <begin position="709"/>
        <end position="779"/>
    </location>
</feature>
<feature type="compositionally biased region" description="Polar residues" evidence="5">
    <location>
        <begin position="1025"/>
        <end position="1041"/>
    </location>
</feature>
<feature type="compositionally biased region" description="Low complexity" evidence="5">
    <location>
        <begin position="1053"/>
        <end position="1077"/>
    </location>
</feature>
<feature type="compositionally biased region" description="Polar residues" evidence="5">
    <location>
        <begin position="1080"/>
        <end position="1090"/>
    </location>
</feature>
<feature type="compositionally biased region" description="Basic residues" evidence="5">
    <location>
        <begin position="1098"/>
        <end position="1119"/>
    </location>
</feature>
<feature type="compositionally biased region" description="Low complexity" evidence="5">
    <location>
        <begin position="1457"/>
        <end position="1467"/>
    </location>
</feature>
<feature type="compositionally biased region" description="Low complexity" evidence="5">
    <location>
        <begin position="1733"/>
        <end position="1745"/>
    </location>
</feature>
<feature type="compositionally biased region" description="Basic and acidic residues" evidence="5">
    <location>
        <begin position="1869"/>
        <end position="1884"/>
    </location>
</feature>
<feature type="compositionally biased region" description="Low complexity" evidence="5">
    <location>
        <begin position="1887"/>
        <end position="1905"/>
    </location>
</feature>
<feature type="compositionally biased region" description="Polar residues" evidence="5">
    <location>
        <begin position="1927"/>
        <end position="1940"/>
    </location>
</feature>
<feature type="compositionally biased region" description="Basic and acidic residues" evidence="5">
    <location>
        <begin position="1994"/>
        <end position="2003"/>
    </location>
</feature>
<feature type="compositionally biased region" description="Low complexity" evidence="5">
    <location>
        <begin position="2035"/>
        <end position="2062"/>
    </location>
</feature>
<feature type="compositionally biased region" description="Basic residues" evidence="5">
    <location>
        <begin position="2122"/>
        <end position="2134"/>
    </location>
</feature>
<feature type="compositionally biased region" description="Low complexity" evidence="5">
    <location>
        <begin position="2135"/>
        <end position="2145"/>
    </location>
</feature>
<feature type="compositionally biased region" description="Polar residues" evidence="5">
    <location>
        <begin position="2146"/>
        <end position="2167"/>
    </location>
</feature>
<feature type="compositionally biased region" description="Polar residues" evidence="5">
    <location>
        <begin position="2175"/>
        <end position="2196"/>
    </location>
</feature>
<feature type="active site" description="Proton acceptor" evidence="48">
    <location>
        <position position="368"/>
    </location>
</feature>
<feature type="binding site" evidence="32 51 56 57 58">
    <location>
        <position position="231"/>
    </location>
    <ligand>
        <name>ATP</name>
        <dbReference type="ChEBI" id="CHEBI:30616"/>
    </ligand>
</feature>
<feature type="binding site" evidence="3">
    <location>
        <position position="283"/>
    </location>
    <ligand>
        <name>chloride</name>
        <dbReference type="ChEBI" id="CHEBI:17996"/>
    </ligand>
</feature>
<feature type="binding site" evidence="3">
    <location>
        <position position="299"/>
    </location>
    <ligand>
        <name>chloride</name>
        <dbReference type="ChEBI" id="CHEBI:17996"/>
    </ligand>
</feature>
<feature type="binding site" evidence="32 51 56 57 58">
    <location>
        <begin position="301"/>
        <end position="304"/>
    </location>
    <ligand>
        <name>ATP</name>
        <dbReference type="ChEBI" id="CHEBI:30616"/>
    </ligand>
</feature>
<feature type="binding site" evidence="32 51 56 57 58">
    <location>
        <position position="351"/>
    </location>
    <ligand>
        <name>ATP</name>
        <dbReference type="ChEBI" id="CHEBI:30616"/>
    </ligand>
</feature>
<feature type="binding site" evidence="3">
    <location>
        <position position="369"/>
    </location>
    <ligand>
        <name>chloride</name>
        <dbReference type="ChEBI" id="CHEBI:17996"/>
    </ligand>
</feature>
<feature type="binding site" evidence="3">
    <location>
        <position position="371"/>
    </location>
    <ligand>
        <name>chloride</name>
        <dbReference type="ChEBI" id="CHEBI:17996"/>
    </ligand>
</feature>
<feature type="modified residue" description="Phosphoserine" evidence="17">
    <location>
        <position position="15"/>
    </location>
</feature>
<feature type="modified residue" description="Phosphoserine" evidence="61 63 65">
    <location>
        <position position="19"/>
    </location>
</feature>
<feature type="modified residue" description="Phosphothreonine" evidence="3">
    <location>
        <position position="60"/>
    </location>
</feature>
<feature type="modified residue" description="Phosphoserine" evidence="17 65 66">
    <location>
        <position position="167"/>
    </location>
</feature>
<feature type="modified residue" description="Phosphoserine" evidence="65 66">
    <location>
        <position position="174"/>
    </location>
</feature>
<feature type="modified residue" description="Phosphoserine; by autocatalysis" evidence="36">
    <location>
        <position position="378"/>
    </location>
</feature>
<feature type="modified residue" description="Phosphoserine; by autocatalysis" evidence="12 14 15 17 36 38">
    <location>
        <position position="382"/>
    </location>
</feature>
<feature type="modified residue" description="Phosphoserine" evidence="17 59 61 63 65">
    <location>
        <position position="1261"/>
    </location>
</feature>
<feature type="modified residue" description="Phosphothreonine" evidence="17">
    <location>
        <position position="1848"/>
    </location>
</feature>
<feature type="modified residue" description="Phosphoserine" evidence="62 63 66">
    <location>
        <position position="1978"/>
    </location>
</feature>
<feature type="modified residue" description="Phosphoserine" evidence="60">
    <location>
        <position position="2002"/>
    </location>
</feature>
<feature type="modified residue" description="Phosphoserine" evidence="61">
    <location>
        <position position="2011"/>
    </location>
</feature>
<feature type="modified residue" description="Phosphoserine" evidence="17 61">
    <location>
        <position position="2012"/>
    </location>
</feature>
<feature type="modified residue" description="Phosphoserine" evidence="61 64 66">
    <location>
        <position position="2027"/>
    </location>
</feature>
<feature type="modified residue" description="Phosphoserine" evidence="17 61 64 65">
    <location>
        <position position="2029"/>
    </location>
</feature>
<feature type="modified residue" description="Phosphoserine" evidence="17 60 61 63 64 65">
    <location>
        <position position="2032"/>
    </location>
</feature>
<feature type="modified residue" description="Phosphoserine" evidence="63">
    <location>
        <position position="2121"/>
    </location>
</feature>
<feature type="modified residue" description="Phosphoserine" evidence="1">
    <location>
        <position position="2270"/>
    </location>
</feature>
<feature type="modified residue" description="Phosphoserine" evidence="1">
    <location>
        <position position="2286"/>
    </location>
</feature>
<feature type="modified residue" description="Phosphoserine" evidence="65">
    <location>
        <position position="2370"/>
    </location>
</feature>
<feature type="modified residue" description="Phosphoserine" evidence="17 65">
    <location>
        <position position="2372"/>
    </location>
</feature>
<feature type="splice variant" id="VSP_050634" description="In isoform 3." evidence="47">
    <location>
        <begin position="1"/>
        <end position="407"/>
    </location>
</feature>
<feature type="splice variant" id="VSP_050637" description="In isoform 3." evidence="47">
    <original>FGMCMLEMATSEYPYSECQNAAQIYRRVTS</original>
    <variation>MDIKKKDFCSVFVIINSHCCCCPQKDCINE</variation>
    <location>
        <begin position="408"/>
        <end position="437"/>
    </location>
</feature>
<feature type="splice variant" id="VSP_040267" description="In isoform 5 and isoform 6." evidence="45">
    <original>V</original>
    <variation>VPQSMAHPCGGTPTYPESQIFFPTIHERPVSFSPPPTCPPKVAISQRRKSTSFLEAQTHHFQPLLRTVGQSLLPPGGSPTNWTPEAVVMLGTTASRVTGESCEIQVHPMFEPSQVYSDYRPGLVLPEEAHYFIPQEAVYVAGVHYQARVAEQYEGIPYNSSVLSSPMKQIPEQKPVQGGPTSSSVFEFPSGQAFLVGHLQNLRLDSGLGPGSPLSSISAPISTDATRLKFHPVFVPHSAPAVLTHNNESRSNCVFEFHVHTPSSSSGEGGGILPQRVYRNRQVAVDLNQEELPPQSVGLHGYLQPVTEEKHNYHAPELTVSVVEPIGQNWPIGSPEYSSDSSQITSSDPSDFQSPPPTGGAAAPFGSDVSMPFIHLPQTVLQESPLFFCFPQGTTSQQVLTASFSSGGSALHPQ</variation>
    <location>
        <position position="713"/>
    </location>
</feature>
<feature type="splice variant" id="VSP_040268" description="In isoform 4." evidence="47">
    <original>AQGQSQGQPSSSSLTGVSSSQPIQHPQQQQGIQQTAPPQQTVQYSLSQTSTSSEATTAQPVSQPQAPQVLPQVSAGKQLPVSQPVPTIQGEPQIPVATQPSVVPVHSGAHFLPVGQPLPTPLLPQYPVSQIPISTPHVSTAQTGFSSLPITMAAGITQPLLTLASSATTAAIPGVSTVVPSQLPTLLQPVTQLPSQVHPQLLQPAVQSMGIPANLGQAAEVPLSSGDVLYQGFPPRLPPQYPGDSNIAPSSNVASVCIHSTVLSPPMPTEVLATPGYFPTVVQPYVESNLLVPMGGVGGQVQVSQPGGSLAQAPTTSSQQAVLE</original>
    <variation>PRRGRSMSVCVPIFLLLPLCPASLPVLFHPTASTVCTSFSFPPPDCPEETFAEKLSKALESVLPMHSASQRKHRRSSLPSLFVSTPQSMAHPCGGTPTYPESQIFFPTIHERPVSFSPPPTCPPKVAISQRRKSTSFLEAQTHHFQPLLRTVGQSLLPPGGSPTNWTPEAVVMLGTTASRVTGESCEIQVHPMFEPSQVYSDYRPGLVLPEEAHYFIPQEAVYVAGVHYQARVAEQYEGIPYNSSVLSSPMKQIPEQKPVQGGPTSSSVFEFPSGQAFLVGHLQNLRLDSGLGPGSPLSSISAPISTDATRLKFHPVFVPHSAPAVLTHNNESRSNCVFEFHVHTPSSSSGEGGGILPQRVYRNRQVAVDLNQEELPPQSVGLHGYLQPVTEEKHNYHAPELTVSVVEPIGQNWPIGSPEYSSDSSQITSSDPSDFQSPPPTGGAAAPFGSDVSMPFIHLPQTVLQESPLFFCFPQGTTSQQVLTASFSSGGSALHPQAQGQSQGQPSSSSLTGVSSSQPIQHPQQQQGIQQTAPPQQTVQYSLSQTSTSSEATTAQPVSQPQAPQVLPQVSAGKQ</variation>
    <location>
        <begin position="714"/>
        <end position="1037"/>
    </location>
</feature>
<feature type="splice variant" id="VSP_040269" description="In isoform 2." evidence="46">
    <location>
        <position position="740"/>
    </location>
</feature>
<feature type="splice variant" id="VSP_050638" description="In isoform 2." evidence="46">
    <location>
        <begin position="792"/>
        <end position="1037"/>
    </location>
</feature>
<feature type="splice variant" id="VSP_040270" description="In isoform 5." evidence="47">
    <location>
        <begin position="792"/>
        <end position="944"/>
    </location>
</feature>
<feature type="splice variant" id="VSP_053767" description="In isoform 6." evidence="45">
    <original>G</original>
    <variation>GCAKFNCASEQVTFKPGGRRTRFLRKMVKKVCPCNQLCR</variation>
    <location>
        <position position="2215"/>
    </location>
</feature>
<feature type="sequence variant" id="VAR_041309" description="In dbSNP:rs11554421." evidence="18">
    <original>A</original>
    <variation>T</variation>
    <location>
        <position position="141"/>
    </location>
</feature>
<feature type="sequence variant" id="VAR_041310" description="In dbSNP:rs34880640." evidence="18">
    <original>A</original>
    <variation>V</variation>
    <location>
        <position position="149"/>
    </location>
</feature>
<feature type="sequence variant" id="VAR_041311" description="In a breast pleomorphic lobular carcinoma sample; somatic mutation." evidence="18">
    <original>E</original>
    <variation>Q</variation>
    <location>
        <position position="419"/>
    </location>
</feature>
<feature type="sequence variant" id="VAR_041312" description="In dbSNP:rs34728563." evidence="18">
    <original>I</original>
    <variation>T</variation>
    <location>
        <position position="509"/>
    </location>
</feature>
<feature type="sequence variant" id="VAR_041313" description="In dbSNP:rs34408667." evidence="18">
    <original>D</original>
    <variation>G</variation>
    <location>
        <position position="527"/>
    </location>
</feature>
<feature type="sequence variant" id="VAR_019992" description="In dbSNP:rs2286007." evidence="18">
    <original>T</original>
    <variation>I</variation>
    <location>
        <position position="665"/>
    </location>
</feature>
<feature type="sequence variant" id="VAR_041314" description="In dbSNP:rs11833299." evidence="18">
    <original>T</original>
    <variation>A</variation>
    <location>
        <position position="674"/>
    </location>
</feature>
<feature type="sequence variant" id="VAR_041315" description="In dbSNP:rs56015776." evidence="18">
    <original>H</original>
    <variation>R</variation>
    <location>
        <position position="823"/>
    </location>
</feature>
<feature type="sequence variant" id="VAR_059033" description="In dbSNP:rs956868." evidence="8 41 42">
    <original>T</original>
    <variation>P</variation>
    <location>
        <position position="1056"/>
    </location>
</feature>
<feature type="sequence variant" id="VAR_035640" description="In a colorectal cancer sample; somatic mutation." evidence="16">
    <original>E</original>
    <variation>G</variation>
    <location>
        <position position="1199"/>
    </location>
</feature>
<feature type="sequence variant" id="VAR_059034" description="In dbSNP:rs7955371." evidence="8 41 42">
    <original>C</original>
    <variation>S</variation>
    <location>
        <position position="1506"/>
    </location>
</feature>
<feature type="sequence variant" id="VAR_041316" description="In dbSNP:rs56351358." evidence="18">
    <original>A</original>
    <variation>V</variation>
    <location>
        <position position="1546"/>
    </location>
</feature>
<feature type="sequence variant" id="VAR_035641" description="In breast cancer samples; infiltrating ductal carcinoma; somatic mutation." evidence="16 18">
    <original>Q</original>
    <variation>E</variation>
    <location>
        <position position="1799"/>
    </location>
</feature>
<feature type="sequence variant" id="VAR_041317" description="In dbSNP:rs12828016." evidence="8 18 42">
    <original>M</original>
    <variation>I</variation>
    <location>
        <position position="1808"/>
    </location>
</feature>
<feature type="sequence variant" id="VAR_041318" description="In dbSNP:rs17755373." evidence="18">
    <original>P</original>
    <variation>L</variation>
    <location>
        <position position="1823"/>
    </location>
</feature>
<feature type="sequence variant" id="VAR_041319" description="In dbSNP:rs36083875." evidence="18">
    <original>R</original>
    <variation>H</variation>
    <location>
        <position position="1957"/>
    </location>
</feature>
<feature type="sequence variant" id="VAR_041320" description="In a breast pleomorphic lobular carcinoma sample; somatic mutation." evidence="18">
    <original>S</original>
    <variation>C</variation>
    <location>
        <position position="2190"/>
    </location>
</feature>
<feature type="sequence variant" id="VAR_041321" description="In a lung adenocarcinoma sample; somatic mutation." evidence="18">
    <original>F</original>
    <variation>L</variation>
    <location>
        <position position="2362"/>
    </location>
</feature>
<feature type="sequence variant" id="VAR_041322" description="In dbSNP:rs56262445." evidence="18">
    <original>R</original>
    <variation>W</variation>
    <location>
        <position position="2380"/>
    </location>
</feature>
<feature type="mutagenesis site" description="Abolished serine/threonine-protein kinase activity. Does not affect ability to activate SGK1." evidence="14 40">
    <original>K</original>
    <variation>M</variation>
    <location>
        <position position="233"/>
    </location>
</feature>
<feature type="mutagenesis site" description="Does not affect ability to phosphorylate OXSR1/OSR1." evidence="25">
    <original>V</original>
    <variation>E</variation>
    <location>
        <position position="318"/>
    </location>
</feature>
<feature type="mutagenesis site" description="Abolished serine/threonine-protein kinase activity." evidence="14 17">
    <original>D</original>
    <variation>A</variation>
    <location>
        <position position="368"/>
    </location>
</feature>
<feature type="mutagenesis site" description="Decreased autophosphorylation, preventing activation of the serine/threonine-protein kinase activity." evidence="14 15 17">
    <original>S</original>
    <variation>A</variation>
    <location>
        <position position="382"/>
    </location>
</feature>
<feature type="mutagenesis site" description="Does not affect binding to OXSR1/OSR1." evidence="35">
    <original>G</original>
    <variation>R</variation>
    <variation>N</variation>
    <variation>D</variation>
    <variation>C</variation>
    <variation>Q</variation>
    <variation>H</variation>
    <variation>I</variation>
    <variation>L</variation>
    <variation>K</variation>
    <variation>M</variation>
    <variation>F</variation>
    <variation>P</variation>
    <variation>S</variation>
    <variation>T</variation>
    <variation>W</variation>
    <variation>Y</variation>
    <variation>V</variation>
    <location>
        <position position="1255"/>
    </location>
</feature>
<feature type="mutagenesis site" description="Does not affect binding to OXSR1/OSR1." evidence="35">
    <original>R</original>
    <variation>A</variation>
    <variation>N</variation>
    <variation>C</variation>
    <variation>E</variation>
    <variation>Q</variation>
    <variation>H</variation>
    <variation>I</variation>
    <variation>L</variation>
    <variation>K</variation>
    <variation>M</variation>
    <variation>F</variation>
    <variation>S</variation>
    <variation>T</variation>
    <variation>W</variation>
    <variation>Y</variation>
    <variation>V</variation>
    <location>
        <position position="1257"/>
    </location>
</feature>
<feature type="mutagenesis site" description="Slightly decreased binding to OXSR1/OSR1 and STK39/SPAK; when associated with A-1860. Abolished binding to OXSR1/OSR1 and STK39/SPAK; when associated with A-1860, A-1946 and A-1958." evidence="14">
    <original>F</original>
    <variation>A</variation>
    <location>
        <position position="1258"/>
    </location>
</feature>
<feature type="mutagenesis site" description="Slightly decreased binding to OXSR1/OSR1 and STK39/SPAK; when associated with A-1258. Abolished binding to OXSR1/OSR1 and STK39/SPAK; when associated with A-1258, A-1946 and A-1958." evidence="14">
    <original>F</original>
    <variation>A</variation>
    <location>
        <position position="1860"/>
    </location>
</feature>
<feature type="mutagenesis site" description="Slightly decreased binding to OXSR1/OSR1 and STK39/SPAK; when associated with A-1958. Abolished binding to OXSR1/OSR1 and STK39/SPAK; when associated with A-1257, A-1860 and A-1958." evidence="14">
    <original>F</original>
    <variation>A</variation>
    <location>
        <position position="1946"/>
    </location>
</feature>
<feature type="mutagenesis site" description="Slightly decreased binding to OXSR1/OSR1 and STK39/SPAK; when associated with A-1946. Abolished binding to OXSR1/OSR1 and STK39/SPAK; when associated with A-1258, A-1860 and A-1946." evidence="14">
    <original>F</original>
    <variation>A</variation>
    <location>
        <position position="1958"/>
    </location>
</feature>
<feature type="mutagenesis site" description="Abolished interaction with EMC2." evidence="37">
    <original>F</original>
    <variation>K</variation>
    <location>
        <position position="2246"/>
    </location>
</feature>
<feature type="mutagenesis site" description="Does not affect interaction with EMC2." evidence="37">
    <original>D</original>
    <variation>K</variation>
    <location>
        <position position="2248"/>
    </location>
</feature>
<feature type="mutagenesis site" description="Abolished interaction with EMC2." evidence="37">
    <original>D</original>
    <variation>A</variation>
    <variation>K</variation>
    <location>
        <position position="2249"/>
    </location>
</feature>
<feature type="mutagenesis site" description="Abolished interaction with EMC2." evidence="37">
    <location>
        <position position="2250"/>
    </location>
</feature>
<feature type="mutagenesis site" description="Does not affect interaction with EMC2." evidence="37">
    <original>H</original>
    <variation>K</variation>
    <location>
        <position position="2251"/>
    </location>
</feature>
<feature type="mutagenesis site" description="Abolished interaction with EMC2." evidence="37">
    <original>L</original>
    <variation>K</variation>
    <location>
        <position position="2253"/>
    </location>
</feature>
<feature type="mutagenesis site" description="Abolished interaction with EMC2." evidence="37">
    <original>W</original>
    <variation>K</variation>
    <variation>L</variation>
    <variation>A</variation>
    <location>
        <position position="2257"/>
    </location>
</feature>
<feature type="mutagenesis site" description="Does not affect interaction with EMC2." evidence="37">
    <original>D</original>
    <variation>A</variation>
    <variation>K</variation>
    <location>
        <position position="2260"/>
    </location>
</feature>
<feature type="sequence conflict" description="In Ref. 8; AA sequence." evidence="47" ref="8">
    <original>R</original>
    <variation>S</variation>
    <location>
        <position position="164"/>
    </location>
</feature>
<feature type="sequence conflict" description="In Ref. 6; BAA20802." evidence="47" ref="6">
    <location>
        <position position="1836"/>
    </location>
</feature>
<feature type="strand" evidence="67">
    <location>
        <begin position="211"/>
        <end position="214"/>
    </location>
</feature>
<feature type="strand" evidence="67">
    <location>
        <begin position="216"/>
        <end position="218"/>
    </location>
</feature>
<feature type="strand" evidence="67">
    <location>
        <begin position="220"/>
        <end position="228"/>
    </location>
</feature>
<feature type="strand" evidence="67">
    <location>
        <begin position="231"/>
        <end position="240"/>
    </location>
</feature>
<feature type="turn" evidence="67">
    <location>
        <begin position="241"/>
        <end position="244"/>
    </location>
</feature>
<feature type="strand" evidence="67">
    <location>
        <begin position="245"/>
        <end position="252"/>
    </location>
</feature>
<feature type="helix" evidence="67">
    <location>
        <begin position="266"/>
        <end position="273"/>
    </location>
</feature>
<feature type="strand" evidence="67">
    <location>
        <begin position="283"/>
        <end position="288"/>
    </location>
</feature>
<feature type="strand" evidence="68">
    <location>
        <begin position="291"/>
        <end position="295"/>
    </location>
</feature>
<feature type="strand" evidence="67">
    <location>
        <begin position="297"/>
        <end position="302"/>
    </location>
</feature>
<feature type="helix" evidence="67">
    <location>
        <begin position="309"/>
        <end position="316"/>
    </location>
</feature>
<feature type="helix" evidence="67">
    <location>
        <begin position="321"/>
        <end position="340"/>
    </location>
</feature>
<feature type="strand" evidence="67">
    <location>
        <begin position="341"/>
        <end position="343"/>
    </location>
</feature>
<feature type="helix" evidence="67">
    <location>
        <begin position="352"/>
        <end position="354"/>
    </location>
</feature>
<feature type="strand" evidence="67">
    <location>
        <begin position="355"/>
        <end position="358"/>
    </location>
</feature>
<feature type="turn" evidence="69">
    <location>
        <begin position="359"/>
        <end position="362"/>
    </location>
</feature>
<feature type="strand" evidence="67">
    <location>
        <begin position="364"/>
        <end position="366"/>
    </location>
</feature>
<feature type="helix" evidence="67">
    <location>
        <begin position="369"/>
        <end position="371"/>
    </location>
</feature>
<feature type="strand" evidence="69">
    <location>
        <begin position="377"/>
        <end position="380"/>
    </location>
</feature>
<feature type="helix" evidence="67">
    <location>
        <begin position="392"/>
        <end position="396"/>
    </location>
</feature>
<feature type="helix" evidence="67">
    <location>
        <begin position="402"/>
        <end position="417"/>
    </location>
</feature>
<feature type="turn" evidence="67">
    <location>
        <begin position="421"/>
        <end position="424"/>
    </location>
</feature>
<feature type="helix" evidence="67">
    <location>
        <begin position="428"/>
        <end position="435"/>
    </location>
</feature>
<feature type="turn" evidence="67">
    <location>
        <begin position="436"/>
        <end position="438"/>
    </location>
</feature>
<feature type="helix" evidence="67">
    <location>
        <begin position="442"/>
        <end position="446"/>
    </location>
</feature>
<feature type="helix" evidence="67">
    <location>
        <begin position="450"/>
        <end position="459"/>
    </location>
</feature>
<feature type="helix" evidence="67">
    <location>
        <begin position="464"/>
        <end position="466"/>
    </location>
</feature>
<feature type="helix" evidence="67">
    <location>
        <begin position="470"/>
        <end position="474"/>
    </location>
</feature>
<feature type="helix" evidence="67">
    <location>
        <begin position="477"/>
        <end position="481"/>
    </location>
</feature>
<feature type="strand" evidence="70">
    <location>
        <begin position="1248"/>
        <end position="1251"/>
    </location>
</feature>
<feature type="strand" evidence="70">
    <location>
        <begin position="1257"/>
        <end position="1261"/>
    </location>
</feature>
<organism evidence="53">
    <name type="scientific">Homo sapiens</name>
    <name type="common">Human</name>
    <dbReference type="NCBI Taxonomy" id="9606"/>
    <lineage>
        <taxon>Eukaryota</taxon>
        <taxon>Metazoa</taxon>
        <taxon>Chordata</taxon>
        <taxon>Craniata</taxon>
        <taxon>Vertebrata</taxon>
        <taxon>Euteleostomi</taxon>
        <taxon>Mammalia</taxon>
        <taxon>Eutheria</taxon>
        <taxon>Euarchontoglires</taxon>
        <taxon>Primates</taxon>
        <taxon>Haplorrhini</taxon>
        <taxon>Catarrhini</taxon>
        <taxon>Hominidae</taxon>
        <taxon>Homo</taxon>
    </lineage>
</organism>
<dbReference type="EC" id="2.7.11.1" evidence="6 12 14 15 17 21 36"/>
<dbReference type="EMBL" id="AJ296290">
    <property type="protein sequence ID" value="CAC15059.1"/>
    <property type="molecule type" value="mRNA"/>
</dbReference>
<dbReference type="EMBL" id="JQ358908">
    <property type="protein sequence ID" value="AEY99342.1"/>
    <property type="molecule type" value="mRNA"/>
</dbReference>
<dbReference type="EMBL" id="FJ515833">
    <property type="protein sequence ID" value="ACS13726.1"/>
    <property type="molecule type" value="Genomic_DNA"/>
</dbReference>
<dbReference type="EMBL" id="FJ515833">
    <property type="protein sequence ID" value="ACS13727.1"/>
    <property type="molecule type" value="Genomic_DNA"/>
</dbReference>
<dbReference type="EMBL" id="FJ515833">
    <property type="protein sequence ID" value="ACS13728.1"/>
    <property type="molecule type" value="Genomic_DNA"/>
</dbReference>
<dbReference type="EMBL" id="AC004765">
    <property type="status" value="NOT_ANNOTATED_CDS"/>
    <property type="molecule type" value="Genomic_DNA"/>
</dbReference>
<dbReference type="EMBL" id="AC004803">
    <property type="status" value="NOT_ANNOTATED_CDS"/>
    <property type="molecule type" value="Genomic_DNA"/>
</dbReference>
<dbReference type="EMBL" id="AF061944">
    <property type="protein sequence ID" value="AAF31483.1"/>
    <property type="status" value="ALT_SEQ"/>
    <property type="molecule type" value="mRNA"/>
</dbReference>
<dbReference type="EMBL" id="AB002342">
    <property type="protein sequence ID" value="BAA20802.2"/>
    <property type="molecule type" value="mRNA"/>
</dbReference>
<dbReference type="EMBL" id="AY231477">
    <property type="protein sequence ID" value="AAO46160.1"/>
    <property type="molecule type" value="mRNA"/>
</dbReference>
<dbReference type="EMBL" id="BC013629">
    <property type="protein sequence ID" value="AAH13629.2"/>
    <property type="molecule type" value="mRNA"/>
</dbReference>
<dbReference type="EMBL" id="BC130467">
    <property type="protein sequence ID" value="AAI30468.1"/>
    <property type="status" value="ALT_SEQ"/>
    <property type="molecule type" value="mRNA"/>
</dbReference>
<dbReference type="EMBL" id="BC130469">
    <property type="protein sequence ID" value="AAI30470.1"/>
    <property type="status" value="ALT_SEQ"/>
    <property type="molecule type" value="mRNA"/>
</dbReference>
<dbReference type="EMBL" id="BK004108">
    <property type="protein sequence ID" value="DAA04494.1"/>
    <property type="status" value="ALT_SEQ"/>
    <property type="molecule type" value="Genomic_DNA"/>
</dbReference>
<dbReference type="CCDS" id="CCDS73419.1">
    <molecule id="Q9H4A3-5"/>
</dbReference>
<dbReference type="CCDS" id="CCDS8506.1">
    <molecule id="Q9H4A3-1"/>
</dbReference>
<dbReference type="RefSeq" id="NP_001171914.1">
    <molecule id="Q9H4A3-6"/>
    <property type="nucleotide sequence ID" value="NM_001184985.2"/>
</dbReference>
<dbReference type="RefSeq" id="NP_055638.2">
    <property type="nucleotide sequence ID" value="NM_014823.2"/>
</dbReference>
<dbReference type="RefSeq" id="NP_061852.3">
    <molecule id="Q9H4A3-1"/>
    <property type="nucleotide sequence ID" value="NM_018979.4"/>
</dbReference>
<dbReference type="RefSeq" id="NP_998820.3">
    <molecule id="Q9H4A3-5"/>
    <property type="nucleotide sequence ID" value="NM_213655.5"/>
</dbReference>
<dbReference type="RefSeq" id="XP_016875326.1">
    <property type="nucleotide sequence ID" value="XM_017019837.1"/>
</dbReference>
<dbReference type="RefSeq" id="XP_016875327.1">
    <molecule id="Q9H4A3-2"/>
    <property type="nucleotide sequence ID" value="XM_017019838.2"/>
</dbReference>
<dbReference type="PDB" id="4PWN">
    <property type="method" value="X-ray"/>
    <property type="resolution" value="1.84 A"/>
    <property type="chains" value="A=210-482"/>
</dbReference>
<dbReference type="PDB" id="5TF9">
    <property type="method" value="X-ray"/>
    <property type="resolution" value="2.50 A"/>
    <property type="chains" value="A/B=206-483"/>
</dbReference>
<dbReference type="PDB" id="5WDY">
    <property type="method" value="X-ray"/>
    <property type="resolution" value="2.46 A"/>
    <property type="chains" value="A/B=206-483"/>
</dbReference>
<dbReference type="PDB" id="5WE8">
    <property type="method" value="X-ray"/>
    <property type="resolution" value="2.01 A"/>
    <property type="chains" value="A/B=206-483"/>
</dbReference>
<dbReference type="PDB" id="6FBK">
    <property type="method" value="X-ray"/>
    <property type="resolution" value="1.74 A"/>
    <property type="chains" value="P=1247-1269"/>
</dbReference>
<dbReference type="PDBsum" id="4PWN"/>
<dbReference type="PDBsum" id="5TF9"/>
<dbReference type="PDBsum" id="5WDY"/>
<dbReference type="PDBsum" id="5WE8"/>
<dbReference type="PDBsum" id="6FBK"/>
<dbReference type="BMRB" id="Q9H4A3"/>
<dbReference type="SMR" id="Q9H4A3"/>
<dbReference type="BioGRID" id="122403">
    <property type="interactions" value="138"/>
</dbReference>
<dbReference type="CORUM" id="Q9H4A3"/>
<dbReference type="DIP" id="DIP-32648N"/>
<dbReference type="ELM" id="Q9H4A3"/>
<dbReference type="FunCoup" id="Q9H4A3">
    <property type="interactions" value="2655"/>
</dbReference>
<dbReference type="IntAct" id="Q9H4A3">
    <property type="interactions" value="110"/>
</dbReference>
<dbReference type="MINT" id="Q9H4A3"/>
<dbReference type="STRING" id="9606.ENSP00000341292"/>
<dbReference type="BindingDB" id="Q9H4A3"/>
<dbReference type="ChEMBL" id="CHEMBL1075173"/>
<dbReference type="GuidetoPHARMACOLOGY" id="2280"/>
<dbReference type="MoonDB" id="Q9H4A3">
    <property type="type" value="Predicted"/>
</dbReference>
<dbReference type="TCDB" id="8.A.23.1.69">
    <property type="family name" value="the basigin (basigin) family"/>
</dbReference>
<dbReference type="GlyConnect" id="484">
    <property type="glycosylation" value="1 O-GlcNAc glycan"/>
</dbReference>
<dbReference type="GlyCosmos" id="Q9H4A3">
    <property type="glycosylation" value="38 sites, 2 glycans"/>
</dbReference>
<dbReference type="GlyGen" id="Q9H4A3">
    <property type="glycosylation" value="56 sites, 2 O-linked glycans (53 sites)"/>
</dbReference>
<dbReference type="iPTMnet" id="Q9H4A3"/>
<dbReference type="MetOSite" id="Q9H4A3"/>
<dbReference type="PhosphoSitePlus" id="Q9H4A3"/>
<dbReference type="BioMuta" id="WNK1"/>
<dbReference type="DMDM" id="296453029"/>
<dbReference type="jPOST" id="Q9H4A3"/>
<dbReference type="MassIVE" id="Q9H4A3"/>
<dbReference type="PeptideAtlas" id="Q9H4A3"/>
<dbReference type="ProteomicsDB" id="80804">
    <molecule id="Q9H4A3-1"/>
</dbReference>
<dbReference type="ProteomicsDB" id="80805">
    <molecule id="Q9H4A3-2"/>
</dbReference>
<dbReference type="ProteomicsDB" id="80806">
    <molecule id="Q9H4A3-4"/>
</dbReference>
<dbReference type="ProteomicsDB" id="80807">
    <molecule id="Q9H4A3-5"/>
</dbReference>
<dbReference type="ProteomicsDB" id="80808">
    <molecule id="Q9H4A3-6"/>
</dbReference>
<dbReference type="Pumba" id="Q9H4A3"/>
<dbReference type="Antibodypedia" id="22083">
    <property type="antibodies" value="601 antibodies from 41 providers"/>
</dbReference>
<dbReference type="DNASU" id="65125"/>
<dbReference type="Ensembl" id="ENST00000315939.11">
    <molecule id="Q9H4A3-1"/>
    <property type="protein sequence ID" value="ENSP00000313059.6"/>
    <property type="gene ID" value="ENSG00000060237.19"/>
</dbReference>
<dbReference type="Ensembl" id="ENST00000340908.9">
    <molecule id="Q9H4A3-5"/>
    <property type="protein sequence ID" value="ENSP00000341292.5"/>
    <property type="gene ID" value="ENSG00000060237.19"/>
</dbReference>
<dbReference type="Ensembl" id="ENST00000530271.6">
    <molecule id="Q9H4A3-7"/>
    <property type="protein sequence ID" value="ENSP00000433548.3"/>
    <property type="gene ID" value="ENSG00000060237.19"/>
</dbReference>
<dbReference type="Ensembl" id="ENST00000537687.5">
    <molecule id="Q9H4A3-6"/>
    <property type="protein sequence ID" value="ENSP00000444465.1"/>
    <property type="gene ID" value="ENSG00000060237.19"/>
</dbReference>
<dbReference type="Ensembl" id="ENST00000675631.1">
    <molecule id="Q9H4A3-4"/>
    <property type="protein sequence ID" value="ENSP00000502415.1"/>
    <property type="gene ID" value="ENSG00000060237.19"/>
</dbReference>
<dbReference type="GeneID" id="65125"/>
<dbReference type="KEGG" id="hsa:65125"/>
<dbReference type="MANE-Select" id="ENST00000315939.11">
    <property type="protein sequence ID" value="ENSP00000313059.6"/>
    <property type="RefSeq nucleotide sequence ID" value="NM_018979.4"/>
    <property type="RefSeq protein sequence ID" value="NP_061852.3"/>
</dbReference>
<dbReference type="UCSC" id="uc001qio.4">
    <molecule id="Q9H4A3-1"/>
    <property type="organism name" value="human"/>
</dbReference>
<dbReference type="AGR" id="HGNC:14540"/>
<dbReference type="CTD" id="65125"/>
<dbReference type="DisGeNET" id="65125"/>
<dbReference type="GeneCards" id="WNK1"/>
<dbReference type="GeneReviews" id="WNK1"/>
<dbReference type="HGNC" id="HGNC:14540">
    <property type="gene designation" value="WNK1"/>
</dbReference>
<dbReference type="HPA" id="ENSG00000060237">
    <property type="expression patterns" value="Low tissue specificity"/>
</dbReference>
<dbReference type="MalaCards" id="WNK1"/>
<dbReference type="MIM" id="201300">
    <property type="type" value="phenotype"/>
</dbReference>
<dbReference type="MIM" id="605232">
    <property type="type" value="gene"/>
</dbReference>
<dbReference type="MIM" id="614492">
    <property type="type" value="phenotype"/>
</dbReference>
<dbReference type="neXtProt" id="NX_Q9H4A3"/>
<dbReference type="OpenTargets" id="ENSG00000060237"/>
<dbReference type="Orphanet" id="970">
    <property type="disease" value="Hereditary sensory and autonomic neuropathy type 2"/>
</dbReference>
<dbReference type="Orphanet" id="88940">
    <property type="disease" value="Pseudohypoaldosteronism type 2C"/>
</dbReference>
<dbReference type="PharmGKB" id="PA33782"/>
<dbReference type="VEuPathDB" id="HostDB:ENSG00000060237"/>
<dbReference type="eggNOG" id="KOG0584">
    <property type="taxonomic scope" value="Eukaryota"/>
</dbReference>
<dbReference type="GeneTree" id="ENSGT00940000155474"/>
<dbReference type="InParanoid" id="Q9H4A3"/>
<dbReference type="OMA" id="PEPNGMT"/>
<dbReference type="OrthoDB" id="4062651at2759"/>
<dbReference type="PAN-GO" id="Q9H4A3">
    <property type="GO annotations" value="11 GO annotations based on evolutionary models"/>
</dbReference>
<dbReference type="PhylomeDB" id="Q9H4A3"/>
<dbReference type="TreeFam" id="TF315363"/>
<dbReference type="PathwayCommons" id="Q9H4A3"/>
<dbReference type="Reactome" id="R-HSA-2672351">
    <property type="pathway name" value="Stimuli-sensing channels"/>
</dbReference>
<dbReference type="SignaLink" id="Q9H4A3"/>
<dbReference type="SIGNOR" id="Q9H4A3"/>
<dbReference type="BioGRID-ORCS" id="65125">
    <property type="hits" value="582 hits in 1210 CRISPR screens"/>
</dbReference>
<dbReference type="CD-CODE" id="DEE660B4">
    <property type="entry name" value="Stress granule"/>
</dbReference>
<dbReference type="CD-CODE" id="FB4E32DD">
    <property type="entry name" value="Presynaptic clusters and postsynaptic densities"/>
</dbReference>
<dbReference type="ChiTaRS" id="WNK1">
    <property type="organism name" value="human"/>
</dbReference>
<dbReference type="EvolutionaryTrace" id="Q9H4A3"/>
<dbReference type="GeneWiki" id="WNK1"/>
<dbReference type="GenomeRNAi" id="65125"/>
<dbReference type="Pharos" id="Q9H4A3">
    <property type="development level" value="Tchem"/>
</dbReference>
<dbReference type="PRO" id="PR:Q9H4A3"/>
<dbReference type="Proteomes" id="UP000005640">
    <property type="component" value="Chromosome 12"/>
</dbReference>
<dbReference type="RNAct" id="Q9H4A3">
    <property type="molecule type" value="protein"/>
</dbReference>
<dbReference type="Bgee" id="ENSG00000060237">
    <property type="expression patterns" value="Expressed in medial globus pallidus and 204 other cell types or tissues"/>
</dbReference>
<dbReference type="ExpressionAtlas" id="Q9H4A3">
    <property type="expression patterns" value="baseline and differential"/>
</dbReference>
<dbReference type="GO" id="GO:0005737">
    <property type="term" value="C:cytoplasm"/>
    <property type="evidence" value="ECO:0000314"/>
    <property type="project" value="UniProtKB"/>
</dbReference>
<dbReference type="GO" id="GO:0005829">
    <property type="term" value="C:cytosol"/>
    <property type="evidence" value="ECO:0000314"/>
    <property type="project" value="HPA"/>
</dbReference>
<dbReference type="GO" id="GO:0043232">
    <property type="term" value="C:intracellular membraneless organelle"/>
    <property type="evidence" value="ECO:0000314"/>
    <property type="project" value="UniProtKB"/>
</dbReference>
<dbReference type="GO" id="GO:0016020">
    <property type="term" value="C:membrane"/>
    <property type="evidence" value="ECO:0000250"/>
    <property type="project" value="ParkinsonsUK-UCL"/>
</dbReference>
<dbReference type="GO" id="GO:0072686">
    <property type="term" value="C:mitotic spindle"/>
    <property type="evidence" value="ECO:0000314"/>
    <property type="project" value="UniProtKB"/>
</dbReference>
<dbReference type="GO" id="GO:0005634">
    <property type="term" value="C:nucleus"/>
    <property type="evidence" value="ECO:0000314"/>
    <property type="project" value="UniProtKB"/>
</dbReference>
<dbReference type="GO" id="GO:0032991">
    <property type="term" value="C:protein-containing complex"/>
    <property type="evidence" value="ECO:0007669"/>
    <property type="project" value="Ensembl"/>
</dbReference>
<dbReference type="GO" id="GO:0005524">
    <property type="term" value="F:ATP binding"/>
    <property type="evidence" value="ECO:0000314"/>
    <property type="project" value="UniProtKB"/>
</dbReference>
<dbReference type="GO" id="GO:0140693">
    <property type="term" value="F:molecular condensate scaffold activity"/>
    <property type="evidence" value="ECO:0000314"/>
    <property type="project" value="UniProtKB"/>
</dbReference>
<dbReference type="GO" id="GO:0019902">
    <property type="term" value="F:phosphatase binding"/>
    <property type="evidence" value="ECO:0000314"/>
    <property type="project" value="UniProtKB"/>
</dbReference>
<dbReference type="GO" id="GO:0030295">
    <property type="term" value="F:protein kinase activator activity"/>
    <property type="evidence" value="ECO:0000315"/>
    <property type="project" value="ParkinsonsUK-UCL"/>
</dbReference>
<dbReference type="GO" id="GO:0004672">
    <property type="term" value="F:protein kinase activity"/>
    <property type="evidence" value="ECO:0000315"/>
    <property type="project" value="ParkinsonsUK-UCL"/>
</dbReference>
<dbReference type="GO" id="GO:0019901">
    <property type="term" value="F:protein kinase binding"/>
    <property type="evidence" value="ECO:0000353"/>
    <property type="project" value="ParkinsonsUK-UCL"/>
</dbReference>
<dbReference type="GO" id="GO:0106310">
    <property type="term" value="F:protein serine kinase activity"/>
    <property type="evidence" value="ECO:0007669"/>
    <property type="project" value="RHEA"/>
</dbReference>
<dbReference type="GO" id="GO:0004674">
    <property type="term" value="F:protein serine/threonine kinase activity"/>
    <property type="evidence" value="ECO:0000314"/>
    <property type="project" value="UniProtKB"/>
</dbReference>
<dbReference type="GO" id="GO:0006884">
    <property type="term" value="P:cell volume homeostasis"/>
    <property type="evidence" value="ECO:0000314"/>
    <property type="project" value="UniProtKB"/>
</dbReference>
<dbReference type="GO" id="GO:0071474">
    <property type="term" value="P:cellular hyperosmotic response"/>
    <property type="evidence" value="ECO:0000314"/>
    <property type="project" value="UniProtKB"/>
</dbReference>
<dbReference type="GO" id="GO:1990869">
    <property type="term" value="P:cellular response to chemokine"/>
    <property type="evidence" value="ECO:0000315"/>
    <property type="project" value="BHF-UCL"/>
</dbReference>
<dbReference type="GO" id="GO:0038116">
    <property type="term" value="P:chemokine (C-C motif) ligand 21 signaling pathway"/>
    <property type="evidence" value="ECO:0000250"/>
    <property type="project" value="BHF-UCL"/>
</dbReference>
<dbReference type="GO" id="GO:0006974">
    <property type="term" value="P:DNA damage response"/>
    <property type="evidence" value="ECO:0000318"/>
    <property type="project" value="GO_Central"/>
</dbReference>
<dbReference type="GO" id="GO:0007507">
    <property type="term" value="P:heart development"/>
    <property type="evidence" value="ECO:0007669"/>
    <property type="project" value="Ensembl"/>
</dbReference>
<dbReference type="GO" id="GO:0030644">
    <property type="term" value="P:intracellular chloride ion homeostasis"/>
    <property type="evidence" value="ECO:0007669"/>
    <property type="project" value="Ensembl"/>
</dbReference>
<dbReference type="GO" id="GO:0035556">
    <property type="term" value="P:intracellular signal transduction"/>
    <property type="evidence" value="ECO:0000314"/>
    <property type="project" value="UniProtKB"/>
</dbReference>
<dbReference type="GO" id="GO:0097022">
    <property type="term" value="P:lymphocyte migration into lymph node"/>
    <property type="evidence" value="ECO:0000250"/>
    <property type="project" value="BHF-UCL"/>
</dbReference>
<dbReference type="GO" id="GO:0140694">
    <property type="term" value="P:membraneless organelle assembly"/>
    <property type="evidence" value="ECO:0000314"/>
    <property type="project" value="UniProtKB"/>
</dbReference>
<dbReference type="GO" id="GO:0055080">
    <property type="term" value="P:monoatomic cation homeostasis"/>
    <property type="evidence" value="ECO:0000250"/>
    <property type="project" value="UniProtKB"/>
</dbReference>
<dbReference type="GO" id="GO:0006811">
    <property type="term" value="P:monoatomic ion transport"/>
    <property type="evidence" value="ECO:0000250"/>
    <property type="project" value="UniProtKB"/>
</dbReference>
<dbReference type="GO" id="GO:0010507">
    <property type="term" value="P:negative regulation of autophagy"/>
    <property type="evidence" value="ECO:0000315"/>
    <property type="project" value="UniProtKB"/>
</dbReference>
<dbReference type="GO" id="GO:0033633">
    <property type="term" value="P:negative regulation of cell-cell adhesion mediated by integrin"/>
    <property type="evidence" value="ECO:0000315"/>
    <property type="project" value="BHF-UCL"/>
</dbReference>
<dbReference type="GO" id="GO:0034115">
    <property type="term" value="P:negative regulation of heterotypic cell-cell adhesion"/>
    <property type="evidence" value="ECO:0000315"/>
    <property type="project" value="BHF-UCL"/>
</dbReference>
<dbReference type="GO" id="GO:1903038">
    <property type="term" value="P:negative regulation of leukocyte cell-cell adhesion"/>
    <property type="evidence" value="ECO:0000315"/>
    <property type="project" value="BHF-UCL"/>
</dbReference>
<dbReference type="GO" id="GO:0090188">
    <property type="term" value="P:negative regulation of pancreatic juice secretion"/>
    <property type="evidence" value="ECO:0007669"/>
    <property type="project" value="Ensembl"/>
</dbReference>
<dbReference type="GO" id="GO:1903077">
    <property type="term" value="P:negative regulation of protein localization to plasma membrane"/>
    <property type="evidence" value="ECO:0000250"/>
    <property type="project" value="UniProtKB"/>
</dbReference>
<dbReference type="GO" id="GO:0031397">
    <property type="term" value="P:negative regulation of protein ubiquitination"/>
    <property type="evidence" value="ECO:0000314"/>
    <property type="project" value="UniProtKB"/>
</dbReference>
<dbReference type="GO" id="GO:0051058">
    <property type="term" value="P:negative regulation of small GTPase mediated signal transduction"/>
    <property type="evidence" value="ECO:0000315"/>
    <property type="project" value="BHF-UCL"/>
</dbReference>
<dbReference type="GO" id="GO:0010766">
    <property type="term" value="P:negative regulation of sodium ion transport"/>
    <property type="evidence" value="ECO:0000250"/>
    <property type="project" value="UniProtKB"/>
</dbReference>
<dbReference type="GO" id="GO:0048666">
    <property type="term" value="P:neuron development"/>
    <property type="evidence" value="ECO:0000303"/>
    <property type="project" value="UniProtKB"/>
</dbReference>
<dbReference type="GO" id="GO:0045766">
    <property type="term" value="P:positive regulation of angiogenesis"/>
    <property type="evidence" value="ECO:0000315"/>
    <property type="project" value="UniProtKB"/>
</dbReference>
<dbReference type="GO" id="GO:0090263">
    <property type="term" value="P:positive regulation of canonical Wnt signaling pathway"/>
    <property type="evidence" value="ECO:0000315"/>
    <property type="project" value="FlyBase"/>
</dbReference>
<dbReference type="GO" id="GO:1903490">
    <property type="term" value="P:positive regulation of mitotic cytokinesis"/>
    <property type="evidence" value="ECO:0000314"/>
    <property type="project" value="UniProtKB"/>
</dbReference>
<dbReference type="GO" id="GO:0003084">
    <property type="term" value="P:positive regulation of systemic arterial blood pressure"/>
    <property type="evidence" value="ECO:0007669"/>
    <property type="project" value="Ensembl"/>
</dbReference>
<dbReference type="GO" id="GO:0010820">
    <property type="term" value="P:positive regulation of T cell chemotaxis"/>
    <property type="evidence" value="ECO:0000315"/>
    <property type="project" value="BHF-UCL"/>
</dbReference>
<dbReference type="GO" id="GO:1904595">
    <property type="term" value="P:positive regulation of termination of RNA polymerase II transcription"/>
    <property type="evidence" value="ECO:0000314"/>
    <property type="project" value="UniProtKB"/>
</dbReference>
<dbReference type="GO" id="GO:0055075">
    <property type="term" value="P:potassium ion homeostasis"/>
    <property type="evidence" value="ECO:0007669"/>
    <property type="project" value="Ensembl"/>
</dbReference>
<dbReference type="GO" id="GO:0045050">
    <property type="term" value="P:protein insertion into ER membrane by stop-transfer membrane-anchor sequence"/>
    <property type="evidence" value="ECO:0000314"/>
    <property type="project" value="UniProtKB"/>
</dbReference>
<dbReference type="GO" id="GO:0006468">
    <property type="term" value="P:protein phosphorylation"/>
    <property type="evidence" value="ECO:0000314"/>
    <property type="project" value="UniProtKB"/>
</dbReference>
<dbReference type="GO" id="GO:1904062">
    <property type="term" value="P:regulation of monoatomic cation transmembrane transport"/>
    <property type="evidence" value="ECO:0000315"/>
    <property type="project" value="ARUK-UCL"/>
</dbReference>
<dbReference type="GO" id="GO:0010793">
    <property type="term" value="P:regulation of mRNA export from nucleus"/>
    <property type="evidence" value="ECO:0000314"/>
    <property type="project" value="UniProtKB"/>
</dbReference>
<dbReference type="GO" id="GO:1902305">
    <property type="term" value="P:regulation of sodium ion transmembrane transport"/>
    <property type="evidence" value="ECO:0007669"/>
    <property type="project" value="Ensembl"/>
</dbReference>
<dbReference type="GO" id="GO:0002028">
    <property type="term" value="P:regulation of sodium ion transport"/>
    <property type="evidence" value="ECO:0000250"/>
    <property type="project" value="UniProtKB"/>
</dbReference>
<dbReference type="GO" id="GO:0007165">
    <property type="term" value="P:signal transduction"/>
    <property type="evidence" value="ECO:0000314"/>
    <property type="project" value="ParkinsonsUK-UCL"/>
</dbReference>
<dbReference type="GO" id="GO:0035725">
    <property type="term" value="P:sodium ion transmembrane transport"/>
    <property type="evidence" value="ECO:0007669"/>
    <property type="project" value="Ensembl"/>
</dbReference>
<dbReference type="GO" id="GO:0050852">
    <property type="term" value="P:T cell receptor signaling pathway"/>
    <property type="evidence" value="ECO:0000250"/>
    <property type="project" value="BHF-UCL"/>
</dbReference>
<dbReference type="CDD" id="cd14030">
    <property type="entry name" value="STKc_WNK1"/>
    <property type="match status" value="1"/>
</dbReference>
<dbReference type="FunFam" id="3.10.20.90:FF:000007">
    <property type="entry name" value="Serine/threonine-protein kinase WNK1 isoform 1"/>
    <property type="match status" value="1"/>
</dbReference>
<dbReference type="FunFam" id="1.10.510.10:FF:000006">
    <property type="entry name" value="Serine/threonine-protein kinase WNK1 isoform 2"/>
    <property type="match status" value="1"/>
</dbReference>
<dbReference type="FunFam" id="3.10.20.90:FF:000012">
    <property type="entry name" value="Serine/threonine-protein kinase WNK1 isoform 2"/>
    <property type="match status" value="1"/>
</dbReference>
<dbReference type="FunFam" id="3.30.200.20:FF:000494">
    <property type="entry name" value="serine/threonine-protein kinase WNK2 isoform X2"/>
    <property type="match status" value="1"/>
</dbReference>
<dbReference type="Gene3D" id="3.10.20.90">
    <property type="entry name" value="Phosphatidylinositol 3-kinase Catalytic Subunit, Chain A, domain 1"/>
    <property type="match status" value="2"/>
</dbReference>
<dbReference type="Gene3D" id="3.30.200.20">
    <property type="entry name" value="Phosphorylase Kinase, domain 1"/>
    <property type="match status" value="1"/>
</dbReference>
<dbReference type="Gene3D" id="1.10.510.10">
    <property type="entry name" value="Transferase(Phosphotransferase) domain 1"/>
    <property type="match status" value="1"/>
</dbReference>
<dbReference type="InterPro" id="IPR056865">
    <property type="entry name" value="CCTL2_WNK"/>
</dbReference>
<dbReference type="InterPro" id="IPR011009">
    <property type="entry name" value="Kinase-like_dom_sf"/>
</dbReference>
<dbReference type="InterPro" id="IPR024678">
    <property type="entry name" value="Kinase_OSR1/WNK_CCT"/>
</dbReference>
<dbReference type="InterPro" id="IPR000719">
    <property type="entry name" value="Prot_kinase_dom"/>
</dbReference>
<dbReference type="InterPro" id="IPR008271">
    <property type="entry name" value="Ser/Thr_kinase_AS"/>
</dbReference>
<dbReference type="InterPro" id="IPR050588">
    <property type="entry name" value="WNK_Ser-Thr_kinase"/>
</dbReference>
<dbReference type="PANTHER" id="PTHR13902">
    <property type="entry name" value="SERINE/THREONINE-PROTEIN KINASE WNK WITH NO LYSINE -RELATED"/>
    <property type="match status" value="1"/>
</dbReference>
<dbReference type="Pfam" id="PF24889">
    <property type="entry name" value="CCTL2_WNK"/>
    <property type="match status" value="1"/>
</dbReference>
<dbReference type="Pfam" id="PF12202">
    <property type="entry name" value="OSR1_C"/>
    <property type="match status" value="1"/>
</dbReference>
<dbReference type="Pfam" id="PF00069">
    <property type="entry name" value="Pkinase"/>
    <property type="match status" value="1"/>
</dbReference>
<dbReference type="SMART" id="SM00220">
    <property type="entry name" value="S_TKc"/>
    <property type="match status" value="1"/>
</dbReference>
<dbReference type="SUPFAM" id="SSF56112">
    <property type="entry name" value="Protein kinase-like (PK-like)"/>
    <property type="match status" value="1"/>
</dbReference>
<dbReference type="PROSITE" id="PS50011">
    <property type="entry name" value="PROTEIN_KINASE_DOM"/>
    <property type="match status" value="1"/>
</dbReference>
<dbReference type="PROSITE" id="PS00108">
    <property type="entry name" value="PROTEIN_KINASE_ST"/>
    <property type="match status" value="1"/>
</dbReference>
<name>WNK1_HUMAN</name>
<comment type="function">
    <text evidence="1 3 6 12 14 17 20 21 22 23 25 30 31 33 34 36 37 38 39 40">Serine/threonine-protein kinase component of the WNK1-SPAK/OSR1 kinase cascade, which acts as a key regulator of blood pressure and regulatory volume increase by promoting ion influx (PubMed:15883153, PubMed:17190791, PubMed:31656913, PubMed:34289367, PubMed:36318922). WNK1 mediates regulatory volume increase in response to hyperosmotic stress by acting as a molecular crowding sensor, which senses cell shrinkage and mediates formation of a membraneless compartment by undergoing liquid-liquid phase separation (PubMed:36318922). The membraneless compartment concentrates WNK1 with its substrates, OXSR1/OSR1 and STK39/SPAK, promoting WNK1-dependent phosphorylation and activation of downstream kinases OXSR1/OSR1 and STK39/SPAK (PubMed:15883153, PubMed:16263722, PubMed:17190791, PubMed:19739668, PubMed:21321328, PubMed:22989884, PubMed:25477473, PubMed:34289367, PubMed:36318922). Following activation, OXSR1/OSR1 and STK39/SPAK catalyze phosphorylation of ion cotransporters SLC12A1/NKCC2, SLC12A2/NKCC1, SLC12A5/KCC2 and SLC12A6/KCC3, regulating their activity (PubMed:16263722, PubMed:21321328). Phosphorylation of Na-K-Cl cotransporters SLC12A2/NKCC1 and SLC12A2/NKCC1 promote their activation and ion influx; simultaneously, phosphorylation of K-Cl cotransporters SLC12A5/KCC2 and SLC12A6/KCC3 inhibit their activity, blocking ion efflux (PubMed:19665974, PubMed:21321328). Also acts as a regulator of angiogenesis in endothelial cells via activation of OXSR1/OSR1 and STK39/SPAK: activation of OXSR1/OSR1 regulates chemotaxis and invasion, while STK39/SPAK regulates endothelial cell proliferation (PubMed:25362046). Also acts independently of the WNK1-SPAK/OSR1 kinase cascade by catalyzing phosphorylation of other substrates, such as SYT2, PCF11 and NEDD4L (PubMed:29196535). Mediates phosphorylation of SYT2, regulating SYT2 association with phospholipids and membrane-binding (By similarity). Regulates mRNA export in the nucleus by mediating phosphorylation of PCF11, thereby decreasing the association between PCF11 and POLR2A/RNA polymerase II and promoting mRNA export to the cytoplasm (PubMed:29196535). Acts as a negative regulator of autophagy (PubMed:27911840). Required for the abscission step during mitosis, independently of the WNK1-SPAK/OSR1 kinase cascade (PubMed:21220314). May also play a role in actin cytoskeletal reorganization (PubMed:10660600). Also acts as a scaffold protein independently of its protein kinase activity: negatively regulates cell membrane localization of various transporters and channels, such as SLC4A4, SLC26A6, SLC26A9, TRPV4 and CFTR (By similarity). Involved in the regulation of epithelial Na(+) channel (ENaC) by promoting activation of SGK1 in a kinase-independent manner: probably acts as a scaffold protein that promotes the recruitment of SGK1 to the mTORC2 complex in response to chloride, leading to mTORC2-dependent phosphorylation and activation of SGK1 (PubMed:36373794). Acts as an assembly factor for the ER membrane protein complex independently of its protein kinase activity: associates with EMC2 in the cytoplasm via its amphipathic alpha-helix, and prevents EMC2 ubiquitination and subsequent degradation, thereby promoting EMC2 stabilization (PubMed:33964204).</text>
</comment>
<comment type="function">
    <molecule>Isoform 3</molecule>
    <text evidence="3 9">Kinase-defective isoform specifically expressed in kidney, which acts as a dominant-negative regulator of the longer isoform 1 (PubMed:14645531). Does not directly inhibit WNK4 and has no direct effect on sodium and chloride ion transport (By similarity). Down-regulates sodium-chloride cotransporter activity indirectly by inhibiting isoform 1, it associates with isoform 1 and attenuates its kinase activity (By similarity). In kidney, may play an important role regulating sodium and potassium balance (By similarity).</text>
</comment>
<comment type="catalytic activity">
    <reaction evidence="6 12 14 17 21 34 36">
        <text>L-seryl-[protein] + ATP = O-phospho-L-seryl-[protein] + ADP + H(+)</text>
        <dbReference type="Rhea" id="RHEA:17989"/>
        <dbReference type="Rhea" id="RHEA-COMP:9863"/>
        <dbReference type="Rhea" id="RHEA-COMP:11604"/>
        <dbReference type="ChEBI" id="CHEBI:15378"/>
        <dbReference type="ChEBI" id="CHEBI:29999"/>
        <dbReference type="ChEBI" id="CHEBI:30616"/>
        <dbReference type="ChEBI" id="CHEBI:83421"/>
        <dbReference type="ChEBI" id="CHEBI:456216"/>
        <dbReference type="EC" id="2.7.11.1"/>
    </reaction>
</comment>
<comment type="catalytic activity">
    <reaction evidence="6 14 15 21 23 34">
        <text>L-threonyl-[protein] + ATP = O-phospho-L-threonyl-[protein] + ADP + H(+)</text>
        <dbReference type="Rhea" id="RHEA:46608"/>
        <dbReference type="Rhea" id="RHEA-COMP:11060"/>
        <dbReference type="Rhea" id="RHEA-COMP:11605"/>
        <dbReference type="ChEBI" id="CHEBI:15378"/>
        <dbReference type="ChEBI" id="CHEBI:30013"/>
        <dbReference type="ChEBI" id="CHEBI:30616"/>
        <dbReference type="ChEBI" id="CHEBI:61977"/>
        <dbReference type="ChEBI" id="CHEBI:456216"/>
        <dbReference type="EC" id="2.7.11.1"/>
    </reaction>
</comment>
<comment type="cofactor">
    <cofactor evidence="6">
        <name>Mg(2+)</name>
        <dbReference type="ChEBI" id="CHEBI:18420"/>
    </cofactor>
</comment>
<comment type="activity regulation">
    <text evidence="3 12 14 15 17 21 36 38 39">Activated in response to hyperosmotic stress: cell shrinkage promotes formation of a membraneless compartment that concentrates WNK1 with its substrates, OXSR1/OSR1 and STK39/SPAK (PubMed:36318922). Activation requires autophosphorylation of Ser-382 and, to a lower extent, Ser-378 (PubMed:15883153, PubMed:16263722, PubMed:16832045, PubMed:17190791, PubMed:31656913, PubMed:34289367). Autophosphorylation and subsequent activation is inhibited by increases in intracellular ionic strength: Cl(-) potently inhibits WNK1 kinase activity via direct binding (By similarity). Also inhibited by K(+) ions (By similarity). Inhibited by small compounds staurosporine, tyrphostin 47, as well as Src tyrosine kinase inhibitors PP1 and PP2 (PubMed:19739668).</text>
</comment>
<comment type="biophysicochemical properties">
    <kinetics>
        <KM evidence="21">52 uM for ATP</KM>
        <KM evidence="21">68.4 uM for a OXSR1/OSR1 peptide</KM>
    </kinetics>
</comment>
<comment type="subunit">
    <text evidence="3 33 37 40">Interacts with WNK3 (By similarity). Interacts with WNK4; inhibiting the activity of WNK4 (By similarity). Interacts with SGK1; promoting its activation (PubMed:36373794). Associates with the mTORC2 complex (PubMed:36373794). Interacts with UVRAG (PubMed:27911840). Interacts (via amphipathic alpha-helix region) with EMC2; promoting the ER membrane protein complex assembly (PubMed:33964204).</text>
</comment>
<comment type="subunit">
    <molecule>Isoform 3</molecule>
    <text evidence="3">Interacts with isoform 1; inhibiting isoform 1 activity.</text>
</comment>
<comment type="interaction">
    <interactant intactId="EBI-457907">
        <id>Q9H4A3</id>
    </interactant>
    <interactant intactId="EBI-620853">
        <id>O95747</id>
        <label>OXSR1</label>
    </interactant>
    <organismsDiffer>false</organismsDiffer>
    <experiments>9</experiments>
</comment>
<comment type="interaction">
    <interactant intactId="EBI-457907">
        <id>Q9H4A3</id>
    </interactant>
    <interactant intactId="EBI-357253">
        <id>P62136</id>
        <label>PPP1CA</label>
    </interactant>
    <organismsDiffer>false</organismsDiffer>
    <experiments>2</experiments>
</comment>
<comment type="interaction">
    <interactant intactId="EBI-457907">
        <id>Q9H4A3</id>
    </interactant>
    <interactant intactId="EBI-476295">
        <id>P31947</id>
        <label>SFN</label>
    </interactant>
    <organismsDiffer>false</organismsDiffer>
    <experiments>4</experiments>
</comment>
<comment type="interaction">
    <interactant intactId="EBI-457907">
        <id>Q9H4A3</id>
    </interactant>
    <interactant intactId="EBI-356498">
        <id>P62258</id>
        <label>YWHAE</label>
    </interactant>
    <organismsDiffer>false</organismsDiffer>
    <experiments>7</experiments>
</comment>
<comment type="interaction">
    <interactant intactId="EBI-457907">
        <id>Q9H4A3</id>
    </interactant>
    <interactant intactId="EBI-359832">
        <id>P61981</id>
        <label>YWHAG</label>
    </interactant>
    <organismsDiffer>false</organismsDiffer>
    <experiments>7</experiments>
</comment>
<comment type="interaction">
    <interactant intactId="EBI-457907">
        <id>Q9H4A3</id>
    </interactant>
    <interactant intactId="EBI-347088">
        <id>P63104</id>
        <label>YWHAZ</label>
    </interactant>
    <organismsDiffer>false</organismsDiffer>
    <experiments>3</experiments>
</comment>
<comment type="interaction">
    <interactant intactId="EBI-457907">
        <id>Q9H4A3</id>
    </interactant>
    <interactant intactId="EBI-458017">
        <id>P29101</id>
        <label>Syt2</label>
    </interactant>
    <organismsDiffer>true</organismsDiffer>
    <experiments>2</experiments>
</comment>
<comment type="subcellular location">
    <subcellularLocation>
        <location evidence="6 17 22 25 33 37 39">Cytoplasm</location>
    </subcellularLocation>
    <subcellularLocation>
        <location evidence="34">Nucleus</location>
    </subcellularLocation>
    <subcellularLocation>
        <location evidence="22">Cytoplasm</location>
        <location evidence="22">Cytoskeleton</location>
        <location evidence="22">Spindle</location>
    </subcellularLocation>
    <text evidence="22 34 39">Mediates formation and localizes to cytoplasmic membraneless compartment in response to hyperosmotic stress (PubMed:36318922). Also localizes to the nucleus (PubMed:29196535). Localizes to the mitotic spindle during mitosis (PubMed:21220314).</text>
</comment>
<comment type="alternative products">
    <event type="alternative promoter"/>
    <event type="alternative splicing"/>
    <isoform>
        <id>Q9H4A3-1</id>
        <name>1</name>
        <name evidence="45">L-WNK1</name>
        <sequence type="displayed"/>
    </isoform>
    <isoform>
        <id>Q9H4A3-2</id>
        <name evidence="46">2</name>
        <sequence type="described" ref="VSP_040269 VSP_050638"/>
    </isoform>
    <isoform>
        <id>Q9H4A3-4</id>
        <name>3</name>
        <name>KS-WNK1</name>
        <name>Kidney-Specific</name>
        <sequence type="described" ref="VSP_050634 VSP_050637"/>
    </isoform>
    <isoform>
        <id>Q9H4A3-5</id>
        <name>4</name>
        <name>Brain and spinal cord variant</name>
        <sequence type="described" ref="VSP_040268"/>
    </isoform>
    <isoform>
        <id>Q9H4A3-6</id>
        <name>5</name>
        <name>Dorsal root ganglia and sciatic nerve variant</name>
        <name>DRG and sciatic nerve variant</name>
        <sequence type="described" ref="VSP_040267 VSP_040270"/>
    </isoform>
    <isoform>
        <id>Q9H4A3-7</id>
        <name>6</name>
        <sequence type="described" ref="VSP_040267 VSP_053767"/>
    </isoform>
    <text>WNK1 is a complex 33-exons gene, in total 9 WNK1 exons are alternatively spliced, some expressed in a tissue-specific manner. Additional isoforms seems to exist.</text>
</comment>
<comment type="tissue specificity">
    <text evidence="6 8 24">Widely expressed, with highest levels observed in the testis, heart, kidney and skeletal muscle.</text>
</comment>
<comment type="tissue specificity">
    <molecule>Isoform 1</molecule>
    <text evidence="24">Strong expression in dorsal root ganglia and spinal cord.</text>
</comment>
<comment type="tissue specificity">
    <molecule>Isoform 3</molecule>
    <text evidence="9">This isoform is kidney-specific and specifically expressed in the distal convoluted tubule (DCT) and connecting tubule (CNT) of the nephron.</text>
</comment>
<comment type="domain">
    <text evidence="39">Disordered regions undergo liquid-liquid phase separation (LLPS) for the formation of a cytoplasmic membraneless compartment that concentrates WNK1 with its substrates, OXSR1/OSR1 and STK39/SPAK.</text>
</comment>
<comment type="domain">
    <text evidence="14 25">The RFXV motifs mediate recognition with downstream kinases OXSR1/OSR1 and STK39/SPAK.</text>
</comment>
<comment type="PTM">
    <text evidence="3 12 14 15 17 36 38">Autophosphorylated at Ser-378 and Ser-382, promoting its activity (PubMed:15883153, PubMed:16263722, PubMed:16832045, PubMed:17190791, PubMed:31656913, PubMed:34289367). Autophosphorylation at Ser-382 is inhibited by intracellular calcium (By similarity). Phosphorylation at Thr-60 increases ability to activate SGK1 (By similarity).</text>
</comment>
<comment type="PTM">
    <text evidence="26 27 28">Ubiquitinated by the BCR(KLHL3) complex, leading to its degradation (PubMed:23387299, PubMed:23576762). Also ubiquitinated by the BCR(KLHL2) complex (PubMed:23838290).</text>
</comment>
<comment type="PTM">
    <text evidence="29">May be O-glycosylated.</text>
</comment>
<comment type="disease" evidence="7">
    <disease id="DI-02228">
        <name>Pseudohypoaldosteronism 2C</name>
        <acronym>PHA2C</acronym>
        <description>An autosomal dominant disorder characterized by severe hypertension, hyperkalemia, hyperchloremia, mild hyperchloremic metabolic acidosis in some cases, and correction of physiologic abnormalities by thiazide diuretics.</description>
        <dbReference type="MIM" id="614492"/>
    </disease>
    <text>The disease is caused by variants affecting the gene represented in this entry.</text>
</comment>
<comment type="disease" evidence="10 13 19">
    <disease id="DI-00548">
        <name>Neuropathy, hereditary sensory and autonomic, 2A</name>
        <acronym>HSAN2A</acronym>
        <description>A form of hereditary sensory and autonomic neuropathy, a genetically and clinically heterogeneous group of disorders characterized by degeneration of dorsal root and autonomic ganglion cells, and by sensory and/or autonomic abnormalities. HSAN2A is an autosomal recessive disorder characterized by impairment of pain, temperature and touch sensation, onset of symptoms in infancy or early childhood, occurrence of distal extremity pathologies (paronychia, whitlows, ulcers, and Charcot joints), frequent amputations, sensory loss that affects all modalities of sensation (lower and upper limbs and perhaps the trunk as well), absence or diminution of tendon reflexes (usually in all limbs), minimal autonomic dysfunction, absence of sensory nerve action potentials, and virtual absence of myelinated fibers with decreased numbers of unmyelinated fibers in sural nerves.</description>
        <dbReference type="MIM" id="201300"/>
    </disease>
    <text>The disease is caused by variants affecting the gene represented in this entry.</text>
</comment>
<comment type="miscellaneous">
    <molecule>Isoform 4</molecule>
    <text evidence="47">Contains the nervous system-specific exon HSN2. Produced by alternative splicing.</text>
</comment>
<comment type="miscellaneous">
    <molecule>Isoform 5</molecule>
    <text evidence="47">Contains the nervous system-specific exon HSN2. Produced by alternative splicing.</text>
</comment>
<comment type="miscellaneous">
    <molecule>Isoform 6</molecule>
    <text evidence="47">Contains the nervous system-specific exon HSN2. Produced by alternative splicing.</text>
</comment>
<comment type="similarity">
    <text evidence="4">Belongs to the protein kinase superfamily. Ser/Thr protein kinase family. WNK subfamily.</text>
</comment>
<comment type="caution">
    <text evidence="50">Was named WNK/'with no lysine(K)' because key residues for catalysis, including the lysine involved in ATP binding, are either not conserved or differ compared to the residues described in other kinase family proteins.</text>
</comment>
<comment type="caution">
    <text evidence="49">HSN2 was originally thought to be an intronless gene lying within a WNK1 gene intron. It has been shown to be a nervous system-specific exon of WNK1 included in isoform 4 and isoform 5 (PubMed:18521183).</text>
</comment>
<comment type="caution">
    <text evidence="47">It is uncertain whether Met-1 or Met-214 is the initiator in isoform 4 and isoform 5.</text>
</comment>
<comment type="sequence caution" evidence="47">
    <conflict type="miscellaneous discrepancy">
        <sequence resource="EMBL-CDS" id="AAF31483"/>
    </conflict>
    <text>Contaminating sequence. Sequence of unknown origin in the C-terminal part.</text>
</comment>
<comment type="sequence caution" evidence="47">
    <conflict type="miscellaneous discrepancy">
        <sequence resource="EMBL-CDS" id="AAI30468"/>
    </conflict>
    <text>Probable cloning artifact.</text>
</comment>
<comment type="sequence caution" evidence="47">
    <conflict type="miscellaneous discrepancy">
        <sequence resource="EMBL-CDS" id="AAI30470"/>
    </conflict>
    <text>Probable cloning artifact.</text>
</comment>
<comment type="sequence caution" evidence="47">
    <conflict type="erroneous gene model prediction">
        <sequence resource="EMBL-CDS" id="DAA04494"/>
    </conflict>
    <text>Includes 3' and 3' intronic sequences.</text>
</comment>
<keyword id="KW-0002">3D-structure</keyword>
<keyword id="KW-0877">Alternative promoter usage</keyword>
<keyword id="KW-0025">Alternative splicing</keyword>
<keyword id="KW-0067">ATP-binding</keyword>
<keyword id="KW-0868">Chloride</keyword>
<keyword id="KW-0963">Cytoplasm</keyword>
<keyword id="KW-0206">Cytoskeleton</keyword>
<keyword id="KW-0903">Direct protein sequencing</keyword>
<keyword id="KW-0325">Glycoprotein</keyword>
<keyword id="KW-0418">Kinase</keyword>
<keyword id="KW-0523">Neurodegeneration</keyword>
<keyword id="KW-0622">Neuropathy</keyword>
<keyword id="KW-0547">Nucleotide-binding</keyword>
<keyword id="KW-0539">Nucleus</keyword>
<keyword id="KW-0597">Phosphoprotein</keyword>
<keyword id="KW-1267">Proteomics identification</keyword>
<keyword id="KW-1185">Reference proteome</keyword>
<keyword id="KW-0723">Serine/threonine-protein kinase</keyword>
<keyword id="KW-0808">Transferase</keyword>
<keyword id="KW-0832">Ubl conjugation</keyword>
<accession>Q9H4A3</accession>
<accession>A1L4B0</accession>
<accession>C5HTZ5</accession>
<accession>C5HTZ6</accession>
<accession>C5HTZ7</accession>
<accession>H6WZW3</accession>
<accession>O15052</accession>
<accession>P54963</accession>
<accession>Q4VBX9</accession>
<accession>Q6IFS5</accession>
<accession>Q86WL5</accession>
<accession>Q8N673</accession>
<accession>Q96CZ6</accession>
<accession>Q9P1S9</accession>
<reference evidence="47" key="1">
    <citation type="journal article" date="2001" name="Oncogene">
        <title>WNK kinases, a novel protein kinase subfamily in multi-cellular organisms.</title>
        <authorList>
            <person name="Verissimo F."/>
            <person name="Jordan P."/>
        </authorList>
    </citation>
    <scope>NUCLEOTIDE SEQUENCE [MRNA] (ISOFORM 1)</scope>
    <scope>TISSUE SPECIFICITY</scope>
    <scope>CHROMOSOMAL LOCATION</scope>
    <scope>VARIANTS PRO-1056; SER-1506 AND ILE-1808</scope>
    <source>
        <tissue evidence="53">Heart</tissue>
    </source>
</reference>
<reference key="2">
    <citation type="journal article" date="2012" name="PLoS ONE">
        <title>A new methodology for quantification of alternatively spliced exons reveals a highly tissue-specific expression pattern of WNK1 isoforms.</title>
        <authorList>
            <person name="Vidal-Petiot E."/>
            <person name="Cheval L."/>
            <person name="Faugeroux J."/>
            <person name="Malard T."/>
            <person name="Doucet A."/>
            <person name="Jeunemaitre X."/>
            <person name="Hadchouel J."/>
        </authorList>
    </citation>
    <scope>NUCLEOTIDE SEQUENCE [MRNA] (ISOFORM 6)</scope>
    <scope>ALTERNATIVE SPLICING</scope>
    <scope>TISSUE SPECIFICITY</scope>
    <source>
        <tissue>Neuron</tissue>
    </source>
</reference>
<reference key="3">
    <citation type="submission" date="2008-12" db="EMBL/GenBank/DDBJ databases">
        <authorList>
            <consortium name="NHLBI resequencing and genotyping service (RS&amp;G)"/>
        </authorList>
    </citation>
    <scope>NUCLEOTIDE SEQUENCE [GENOMIC DNA]</scope>
    <scope>VARIANTS PRO-1056; SER-1506 AND ILE-1808</scope>
</reference>
<reference key="4">
    <citation type="journal article" date="2006" name="Nature">
        <title>The finished DNA sequence of human chromosome 12.</title>
        <authorList>
            <person name="Scherer S.E."/>
            <person name="Muzny D.M."/>
            <person name="Buhay C.J."/>
            <person name="Chen R."/>
            <person name="Cree A."/>
            <person name="Ding Y."/>
            <person name="Dugan-Rocha S."/>
            <person name="Gill R."/>
            <person name="Gunaratne P."/>
            <person name="Harris R.A."/>
            <person name="Hawes A.C."/>
            <person name="Hernandez J."/>
            <person name="Hodgson A.V."/>
            <person name="Hume J."/>
            <person name="Jackson A."/>
            <person name="Khan Z.M."/>
            <person name="Kovar-Smith C."/>
            <person name="Lewis L.R."/>
            <person name="Lozado R.J."/>
            <person name="Metzker M.L."/>
            <person name="Milosavljevic A."/>
            <person name="Miner G.R."/>
            <person name="Montgomery K.T."/>
            <person name="Morgan M.B."/>
            <person name="Nazareth L.V."/>
            <person name="Scott G."/>
            <person name="Sodergren E."/>
            <person name="Song X.-Z."/>
            <person name="Steffen D."/>
            <person name="Lovering R.C."/>
            <person name="Wheeler D.A."/>
            <person name="Worley K.C."/>
            <person name="Yuan Y."/>
            <person name="Zhang Z."/>
            <person name="Adams C.Q."/>
            <person name="Ansari-Lari M.A."/>
            <person name="Ayele M."/>
            <person name="Brown M.J."/>
            <person name="Chen G."/>
            <person name="Chen Z."/>
            <person name="Clerc-Blankenburg K.P."/>
            <person name="Davis C."/>
            <person name="Delgado O."/>
            <person name="Dinh H.H."/>
            <person name="Draper H."/>
            <person name="Gonzalez-Garay M.L."/>
            <person name="Havlak P."/>
            <person name="Jackson L.R."/>
            <person name="Jacob L.S."/>
            <person name="Kelly S.H."/>
            <person name="Li L."/>
            <person name="Li Z."/>
            <person name="Liu J."/>
            <person name="Liu W."/>
            <person name="Lu J."/>
            <person name="Maheshwari M."/>
            <person name="Nguyen B.-V."/>
            <person name="Okwuonu G.O."/>
            <person name="Pasternak S."/>
            <person name="Perez L.M."/>
            <person name="Plopper F.J.H."/>
            <person name="Santibanez J."/>
            <person name="Shen H."/>
            <person name="Tabor P.E."/>
            <person name="Verduzco D."/>
            <person name="Waldron L."/>
            <person name="Wang Q."/>
            <person name="Williams G.A."/>
            <person name="Zhang J."/>
            <person name="Zhou J."/>
            <person name="Allen C.C."/>
            <person name="Amin A.G."/>
            <person name="Anyalebechi V."/>
            <person name="Bailey M."/>
            <person name="Barbaria J.A."/>
            <person name="Bimage K.E."/>
            <person name="Bryant N.P."/>
            <person name="Burch P.E."/>
            <person name="Burkett C.E."/>
            <person name="Burrell K.L."/>
            <person name="Calderon E."/>
            <person name="Cardenas V."/>
            <person name="Carter K."/>
            <person name="Casias K."/>
            <person name="Cavazos I."/>
            <person name="Cavazos S.R."/>
            <person name="Ceasar H."/>
            <person name="Chacko J."/>
            <person name="Chan S.N."/>
            <person name="Chavez D."/>
            <person name="Christopoulos C."/>
            <person name="Chu J."/>
            <person name="Cockrell R."/>
            <person name="Cox C.D."/>
            <person name="Dang M."/>
            <person name="Dathorne S.R."/>
            <person name="David R."/>
            <person name="Davis C.M."/>
            <person name="Davy-Carroll L."/>
            <person name="Deshazo D.R."/>
            <person name="Donlin J.E."/>
            <person name="D'Souza L."/>
            <person name="Eaves K.A."/>
            <person name="Egan A."/>
            <person name="Emery-Cohen A.J."/>
            <person name="Escotto M."/>
            <person name="Flagg N."/>
            <person name="Forbes L.D."/>
            <person name="Gabisi A.M."/>
            <person name="Garza M."/>
            <person name="Hamilton C."/>
            <person name="Henderson N."/>
            <person name="Hernandez O."/>
            <person name="Hines S."/>
            <person name="Hogues M.E."/>
            <person name="Huang M."/>
            <person name="Idlebird D.G."/>
            <person name="Johnson R."/>
            <person name="Jolivet A."/>
            <person name="Jones S."/>
            <person name="Kagan R."/>
            <person name="King L.M."/>
            <person name="Leal B."/>
            <person name="Lebow H."/>
            <person name="Lee S."/>
            <person name="LeVan J.M."/>
            <person name="Lewis L.C."/>
            <person name="London P."/>
            <person name="Lorensuhewa L.M."/>
            <person name="Loulseged H."/>
            <person name="Lovett D.A."/>
            <person name="Lucier A."/>
            <person name="Lucier R.L."/>
            <person name="Ma J."/>
            <person name="Madu R.C."/>
            <person name="Mapua P."/>
            <person name="Martindale A.D."/>
            <person name="Martinez E."/>
            <person name="Massey E."/>
            <person name="Mawhiney S."/>
            <person name="Meador M.G."/>
            <person name="Mendez S."/>
            <person name="Mercado C."/>
            <person name="Mercado I.C."/>
            <person name="Merritt C.E."/>
            <person name="Miner Z.L."/>
            <person name="Minja E."/>
            <person name="Mitchell T."/>
            <person name="Mohabbat F."/>
            <person name="Mohabbat K."/>
            <person name="Montgomery B."/>
            <person name="Moore N."/>
            <person name="Morris S."/>
            <person name="Munidasa M."/>
            <person name="Ngo R.N."/>
            <person name="Nguyen N.B."/>
            <person name="Nickerson E."/>
            <person name="Nwaokelemeh O.O."/>
            <person name="Nwokenkwo S."/>
            <person name="Obregon M."/>
            <person name="Oguh M."/>
            <person name="Oragunye N."/>
            <person name="Oviedo R.J."/>
            <person name="Parish B.J."/>
            <person name="Parker D.N."/>
            <person name="Parrish J."/>
            <person name="Parks K.L."/>
            <person name="Paul H.A."/>
            <person name="Payton B.A."/>
            <person name="Perez A."/>
            <person name="Perrin W."/>
            <person name="Pickens A."/>
            <person name="Primus E.L."/>
            <person name="Pu L.-L."/>
            <person name="Puazo M."/>
            <person name="Quiles M.M."/>
            <person name="Quiroz J.B."/>
            <person name="Rabata D."/>
            <person name="Reeves K."/>
            <person name="Ruiz S.J."/>
            <person name="Shao H."/>
            <person name="Sisson I."/>
            <person name="Sonaike T."/>
            <person name="Sorelle R.P."/>
            <person name="Sutton A.E."/>
            <person name="Svatek A.F."/>
            <person name="Svetz L.A."/>
            <person name="Tamerisa K.S."/>
            <person name="Taylor T.R."/>
            <person name="Teague B."/>
            <person name="Thomas N."/>
            <person name="Thorn R.D."/>
            <person name="Trejos Z.Y."/>
            <person name="Trevino B.K."/>
            <person name="Ukegbu O.N."/>
            <person name="Urban J.B."/>
            <person name="Vasquez L.I."/>
            <person name="Vera V.A."/>
            <person name="Villasana D.M."/>
            <person name="Wang L."/>
            <person name="Ward-Moore S."/>
            <person name="Warren J.T."/>
            <person name="Wei X."/>
            <person name="White F."/>
            <person name="Williamson A.L."/>
            <person name="Wleczyk R."/>
            <person name="Wooden H.S."/>
            <person name="Wooden S.H."/>
            <person name="Yen J."/>
            <person name="Yoon L."/>
            <person name="Yoon V."/>
            <person name="Zorrilla S.E."/>
            <person name="Nelson D."/>
            <person name="Kucherlapati R."/>
            <person name="Weinstock G."/>
            <person name="Gibbs R.A."/>
        </authorList>
    </citation>
    <scope>NUCLEOTIDE SEQUENCE [LARGE SCALE GENOMIC DNA]</scope>
</reference>
<reference evidence="47" key="5">
    <citation type="journal article" date="2000" name="J. Biol. Chem.">
        <title>PSK, a novel STE20-like kinase derived from prostatic carcinoma that activates the JNK MAPK pathway and regulates actin cytoskeletal organisation.</title>
        <authorList>
            <person name="Moore T.M."/>
            <person name="Garg R."/>
            <person name="Johnson C."/>
            <person name="Coptcoat M.J."/>
            <person name="Ridley A.J."/>
            <person name="Morris J.D.H."/>
        </authorList>
    </citation>
    <scope>NUCLEOTIDE SEQUENCE [MRNA] OF 1-668 (ISOFORMS 1/2)</scope>
    <scope>FUNCTION</scope>
    <scope>CATALYTIC ACTIVITY</scope>
    <scope>SUBCELLULAR LOCATION</scope>
    <scope>TISSUE SPECIFICITY</scope>
    <source>
        <tissue>Mammary carcinoma</tissue>
    </source>
</reference>
<reference evidence="47" key="6">
    <citation type="journal article" date="1997" name="DNA Res.">
        <title>Prediction of the coding sequences of unidentified human genes. VII. The complete sequences of 100 new cDNA clones from brain which can code for large proteins in vitro.</title>
        <authorList>
            <person name="Nagase T."/>
            <person name="Ishikawa K."/>
            <person name="Nakajima D."/>
            <person name="Ohira M."/>
            <person name="Seki N."/>
            <person name="Miyajima N."/>
            <person name="Tanaka A."/>
            <person name="Kotani H."/>
            <person name="Nomura N."/>
            <person name="Ohara O."/>
        </authorList>
    </citation>
    <scope>NUCLEOTIDE SEQUENCE [LARGE SCALE MRNA] OF 69-2382 (ISOFORM 2)</scope>
    <scope>VARIANTS PRO-1056 AND SER-1506</scope>
    <source>
        <tissue evidence="52">Brain</tissue>
    </source>
</reference>
<reference evidence="47" key="7">
    <citation type="journal article" date="2002" name="DNA Res.">
        <title>Construction of expression-ready cDNA clones for KIAA genes: manual curation of 330 KIAA cDNA clones.</title>
        <authorList>
            <person name="Nakajima D."/>
            <person name="Okazaki N."/>
            <person name="Yamakawa H."/>
            <person name="Kikuno R."/>
            <person name="Ohara O."/>
            <person name="Nagase T."/>
        </authorList>
    </citation>
    <scope>SEQUENCE REVISION TO N-TERMINUS</scope>
</reference>
<reference key="8">
    <citation type="journal article" date="1989" name="Ciba Found. Symp.">
        <title>Nucleoplasmic and cytoplasmic glycoproteins.</title>
        <authorList>
            <person name="Hart G.W."/>
            <person name="Haltiwanger R.S."/>
            <person name="Holt G.D."/>
            <person name="Kelly W.G."/>
        </authorList>
    </citation>
    <scope>PROTEIN SEQUENCE OF 163-175</scope>
    <scope>GLYCOSYLATION</scope>
</reference>
<reference evidence="47" key="9">
    <citation type="journal article" date="2003" name="Mol. Cell. Biol.">
        <title>Multiple promoters in the WNK1 gene: one controls expression of a kidney-specific kinase-defective isoform.</title>
        <authorList>
            <person name="Delaloy C."/>
            <person name="Lu J."/>
            <person name="Houot A.-M."/>
            <person name="Disse-Nicodeme S."/>
            <person name="Gasc J.-M."/>
            <person name="Corvol P."/>
            <person name="Jeunemaitre X."/>
        </authorList>
    </citation>
    <scope>PARTIAL NUCLEOTIDE SEQUENCE [MRNA] (N-TERMINUS OF ISOFORM 3)</scope>
    <scope>ALTERNATIVE PROMOTER USAGE</scope>
    <scope>ALTERNATIVE SPLICING</scope>
    <scope>TISSUE SPECIFICITY</scope>
    <source>
        <tissue evidence="9">Kidney</tissue>
    </source>
</reference>
<reference evidence="47" key="10">
    <citation type="journal article" date="2004" name="Genome Res.">
        <title>The status, quality, and expansion of the NIH full-length cDNA project: the Mammalian Gene Collection (MGC).</title>
        <authorList>
            <consortium name="The MGC Project Team"/>
        </authorList>
    </citation>
    <scope>PARTIAL NUCLEOTIDE SEQUENCE [LARGE SCALE MRNA] (ISOFORMS 1/4/5)</scope>
    <source>
        <tissue evidence="11">Placenta</tissue>
    </source>
</reference>
<reference key="11">
    <citation type="journal article" date="2004" name="Am. J. Hum. Genet.">
        <title>Identification of a novel gene (HSN2) causing hereditary sensory and autonomic neuropathy type II through the study of Canadian genetic isolates.</title>
        <authorList>
            <person name="Lafreniere R.G."/>
            <person name="MacDonald M.L.E."/>
            <person name="Dube M.-P."/>
            <person name="MacFarlane J."/>
            <person name="O'Driscoll M."/>
            <person name="Brais B."/>
            <person name="Meilleur S."/>
            <person name="Brinkman R.R."/>
            <person name="Dadivas O."/>
            <person name="Pape T."/>
            <person name="Platon C."/>
            <person name="Radomski C."/>
            <person name="Risler J."/>
            <person name="Thompson J."/>
            <person name="Guerra-Escobio A.-M."/>
            <person name="Davar G."/>
            <person name="Breakefield X.O."/>
            <person name="Pimstone S.N."/>
            <person name="Green R."/>
            <person name="Pryse-Phillips W."/>
            <person name="Goldberg Y.P."/>
            <person name="Younghusband H.B."/>
            <person name="Hayden M.R."/>
            <person name="Sherrington R."/>
            <person name="Rouleau G.A."/>
            <person name="Samuels M.E."/>
        </authorList>
    </citation>
    <scope>IDENTIFICATION (ISOFORMS 4/5)</scope>
    <scope>INVOLVEMENT IN HSAN2A</scope>
</reference>
<reference evidence="47" key="12">
    <citation type="journal article" date="2001" name="Science">
        <title>Human hypertension caused by mutations in WNK kinases.</title>
        <authorList>
            <person name="Wilson F.H."/>
            <person name="Disse-Nicodeme S."/>
            <person name="Choate K.A."/>
            <person name="Ishikawa K."/>
            <person name="Nelson-Williams C."/>
            <person name="Desitter I."/>
            <person name="Gunel M."/>
            <person name="Milford D.V."/>
            <person name="Lipkin G.W."/>
            <person name="Achard J.-M."/>
            <person name="Feely M.P."/>
            <person name="Dussol B."/>
            <person name="Berland Y."/>
            <person name="Unwin R.J."/>
            <person name="Mayan H."/>
            <person name="Simon D.B."/>
            <person name="Farfel Z."/>
            <person name="Jeunemaitre X."/>
            <person name="Lifton R.P."/>
        </authorList>
    </citation>
    <scope>INVOLVEMENT IN PHA2C</scope>
</reference>
<reference key="13">
    <citation type="journal article" date="2005" name="J. Biol. Chem.">
        <title>Properties of WNK1 and implications for other family members.</title>
        <authorList>
            <person name="Lenertz L.Y."/>
            <person name="Lee B.H."/>
            <person name="Min X."/>
            <person name="Xu B.E."/>
            <person name="Wedin K."/>
            <person name="Earnest S."/>
            <person name="Goldsmith E.J."/>
            <person name="Cobb M.H."/>
        </authorList>
    </citation>
    <scope>FUNCTION</scope>
    <scope>CATALYTIC ACTIVITY</scope>
    <scope>ACTIVITY REGULATION</scope>
    <scope>PHOSPHORYLATION AT SER-382</scope>
</reference>
<reference key="14">
    <citation type="journal article" date="2005" name="J. Biol. Chem.">
        <title>WNK1 regulates phosphorylation of cation-chloride-coupled cotransporters via the STE20-related kinases, SPAK and OSR1.</title>
        <authorList>
            <person name="Moriguchi T."/>
            <person name="Urushiyama S."/>
            <person name="Hisamoto N."/>
            <person name="Iemura S."/>
            <person name="Uchida S."/>
            <person name="Natsume T."/>
            <person name="Matsumoto K."/>
            <person name="Shibuya H."/>
        </authorList>
    </citation>
    <scope>FUNCTION</scope>
    <scope>CATALYTIC ACTIVITY</scope>
    <scope>ACTIVE SITE</scope>
    <scope>ACTIVITY REGULATION</scope>
    <scope>DOMAIN</scope>
    <scope>PHOSPHORYLATION AT SER-382</scope>
    <scope>MUTAGENESIS OF LYS-233; ASP-368; SER-382; PHE-1258; PHE-1860; PHE-1946 AND PHE-1958</scope>
</reference>
<reference key="15">
    <citation type="journal article" date="2005" name="Neurology">
        <title>Two mutations in the HSN2 gene explain the high prevalence of HSAN2 in French Canadians.</title>
        <authorList>
            <person name="Roddier K."/>
            <person name="Thomas T."/>
            <person name="Marleau G."/>
            <person name="Gagnon A.M."/>
            <person name="Dicaire M.J."/>
            <person name="St Denis A."/>
            <person name="Gosselin I."/>
            <person name="Sarrazin A.M."/>
            <person name="Larbrisseau A."/>
            <person name="Lambert M."/>
            <person name="Vanasse M."/>
            <person name="Gaudet D."/>
            <person name="Rouleau G.A."/>
            <person name="Brais B."/>
        </authorList>
    </citation>
    <scope>INVOLVEMENT IN HSAN2A</scope>
</reference>
<reference key="16">
    <citation type="journal article" date="2006" name="Cell">
        <title>Global, in vivo, and site-specific phosphorylation dynamics in signaling networks.</title>
        <authorList>
            <person name="Olsen J.V."/>
            <person name="Blagoev B."/>
            <person name="Gnad F."/>
            <person name="Macek B."/>
            <person name="Kumar C."/>
            <person name="Mortensen P."/>
            <person name="Mann M."/>
        </authorList>
    </citation>
    <scope>PHOSPHORYLATION [LARGE SCALE ANALYSIS] AT SER-2002 AND SER-2032</scope>
    <scope>IDENTIFICATION BY MASS SPECTROMETRY [LARGE SCALE ANALYSIS]</scope>
    <source>
        <tissue>Cervix carcinoma</tissue>
    </source>
</reference>
<reference key="17">
    <citation type="journal article" date="2006" name="Nat. Biotechnol.">
        <title>A probability-based approach for high-throughput protein phosphorylation analysis and site localization.</title>
        <authorList>
            <person name="Beausoleil S.A."/>
            <person name="Villen J."/>
            <person name="Gerber S.A."/>
            <person name="Rush J."/>
            <person name="Gygi S.P."/>
        </authorList>
    </citation>
    <scope>PHOSPHORYLATION [LARGE SCALE ANALYSIS] AT SER-1261</scope>
    <scope>IDENTIFICATION BY MASS SPECTROMETRY [LARGE SCALE ANALYSIS]</scope>
    <source>
        <tissue>Cervix carcinoma</tissue>
    </source>
</reference>
<reference key="18">
    <citation type="journal article" date="2006" name="Proc. Natl. Acad. Sci. U.S.A.">
        <title>WNK1 and OSR1 regulate the Na+, K+, 2Cl- cotransporter in HeLa cells.</title>
        <authorList>
            <person name="Anselmo A.N."/>
            <person name="Earnest S."/>
            <person name="Chen W."/>
            <person name="Juang Y.C."/>
            <person name="Kim S.C."/>
            <person name="Zhao Y."/>
            <person name="Cobb M.H."/>
        </authorList>
    </citation>
    <scope>FUNCTION</scope>
    <scope>CATALYTIC ACTIVITY</scope>
    <scope>ACTIVITY REGULATION</scope>
    <scope>PHOSPHORYLATION AT SER-382</scope>
    <scope>MUTAGENESIS OF SER-382</scope>
</reference>
<reference key="19">
    <citation type="journal article" date="2007" name="J. Cell Biol.">
        <title>Regulation of activity and localization of the WNK1 protein kinase by hyperosmotic stress.</title>
        <authorList>
            <person name="Zagorska A."/>
            <person name="Pozo-Guisado E."/>
            <person name="Boudeau J."/>
            <person name="Vitari A.C."/>
            <person name="Rafiqi F.H."/>
            <person name="Thastrup J."/>
            <person name="Deak M."/>
            <person name="Campbell D.G."/>
            <person name="Morrice N.A."/>
            <person name="Prescott A.R."/>
            <person name="Alessi D.R."/>
        </authorList>
    </citation>
    <scope>FUNCTION</scope>
    <scope>CATALYTIC ACTIVITY</scope>
    <scope>SUBCELLULAR LOCATION</scope>
    <scope>ACTIVITY REGULATION</scope>
    <scope>PHOSPHORYLATION AT SER-15; SER-167; SER-382; THR-1848; SER-1261; SER-2012; SER-2029; SER-2032 AND SER-2372</scope>
    <scope>MUTAGENESIS OF ASP-368 AND SER-382</scope>
</reference>
<reference key="20">
    <citation type="journal article" date="2008" name="J. Clin. Invest.">
        <title>Mutations in the nervous system--specific HSN2 exon of WNK1 cause hereditary sensory neuropathy type II.</title>
        <authorList>
            <person name="Shekarabi M."/>
            <person name="Girard N."/>
            <person name="Riviere J.B."/>
            <person name="Dion P."/>
            <person name="Houle M."/>
            <person name="Toulouse A."/>
            <person name="Lafreniere R.G."/>
            <person name="Vercauteren F."/>
            <person name="Hince P."/>
            <person name="Laganiere J."/>
            <person name="Rochefort D."/>
            <person name="Faivre L."/>
            <person name="Samuels M."/>
            <person name="Rouleau G.A."/>
        </authorList>
    </citation>
    <scope>ALTERNATIVE SPLICING (ISOFORMS 4 AND 5)</scope>
    <scope>INVOLVEMENT IN HSAN2A</scope>
</reference>
<reference key="21">
    <citation type="journal article" date="2008" name="J. Proteome Res.">
        <title>Combining protein-based IMAC, peptide-based IMAC, and MudPIT for efficient phosphoproteomic analysis.</title>
        <authorList>
            <person name="Cantin G.T."/>
            <person name="Yi W."/>
            <person name="Lu B."/>
            <person name="Park S.K."/>
            <person name="Xu T."/>
            <person name="Lee J.-D."/>
            <person name="Yates J.R. III"/>
        </authorList>
    </citation>
    <scope>IDENTIFICATION BY MASS SPECTROMETRY [LARGE SCALE ANALYSIS]</scope>
    <source>
        <tissue>Cervix carcinoma</tissue>
    </source>
</reference>
<reference key="22">
    <citation type="journal article" date="2008" name="Proc. Natl. Acad. Sci. U.S.A.">
        <title>A quantitative atlas of mitotic phosphorylation.</title>
        <authorList>
            <person name="Dephoure N."/>
            <person name="Zhou C."/>
            <person name="Villen J."/>
            <person name="Beausoleil S.A."/>
            <person name="Bakalarski C.E."/>
            <person name="Elledge S.J."/>
            <person name="Gygi S.P."/>
        </authorList>
    </citation>
    <scope>PHOSPHORYLATION [LARGE SCALE ANALYSIS] AT SER-19; SER-1261; SER-2011; SER-2012; SER-2027; SER-2029 AND SER-2032</scope>
    <scope>IDENTIFICATION BY MASS SPECTROMETRY [LARGE SCALE ANALYSIS]</scope>
    <source>
        <tissue>Cervix carcinoma</tissue>
    </source>
</reference>
<reference key="23">
    <citation type="journal article" date="2009" name="Anal. Chem.">
        <title>Lys-N and trypsin cover complementary parts of the phosphoproteome in a refined SCX-based approach.</title>
        <authorList>
            <person name="Gauci S."/>
            <person name="Helbig A.O."/>
            <person name="Slijper M."/>
            <person name="Krijgsveld J."/>
            <person name="Heck A.J."/>
            <person name="Mohammed S."/>
        </authorList>
    </citation>
    <scope>IDENTIFICATION BY MASS SPECTROMETRY [LARGE SCALE ANALYSIS]</scope>
</reference>
<reference key="24">
    <citation type="journal article" date="2009" name="Biochemistry">
        <title>Kinetic mechanism and inhibitor characterization of WNK1 kinase.</title>
        <authorList>
            <person name="Yagi Y.I."/>
            <person name="Abe K."/>
            <person name="Ikebukuro K."/>
            <person name="Sode K."/>
        </authorList>
    </citation>
    <scope>FUNCTION</scope>
    <scope>CATALYTIC ACTIVITY</scope>
    <scope>BIOPHYSICOCHEMICAL PROPERTIES</scope>
    <scope>ACTIVITY REGULATION</scope>
</reference>
<reference key="25">
    <citation type="journal article" date="2009" name="Cell">
        <title>Sites of regulated phosphorylation that control K-Cl cotransporter activity.</title>
        <authorList>
            <person name="Rinehart J."/>
            <person name="Maksimova Y.D."/>
            <person name="Tanis J.E."/>
            <person name="Stone K.L."/>
            <person name="Hodson C.A."/>
            <person name="Zhang J."/>
            <person name="Risinger M."/>
            <person name="Pan W."/>
            <person name="Wu D."/>
            <person name="Colangelo C.M."/>
            <person name="Forbush B."/>
            <person name="Joiner C.H."/>
            <person name="Gulcicek E.E."/>
            <person name="Gallagher P.G."/>
            <person name="Lifton R.P."/>
        </authorList>
    </citation>
    <scope>FUNCTION</scope>
</reference>
<reference key="26">
    <citation type="journal article" date="2009" name="Sci. Signal.">
        <title>Quantitative phosphoproteomic analysis of T cell receptor signaling reveals system-wide modulation of protein-protein interactions.</title>
        <authorList>
            <person name="Mayya V."/>
            <person name="Lundgren D.H."/>
            <person name="Hwang S.-I."/>
            <person name="Rezaul K."/>
            <person name="Wu L."/>
            <person name="Eng J.K."/>
            <person name="Rodionov V."/>
            <person name="Han D.K."/>
        </authorList>
    </citation>
    <scope>PHOSPHORYLATION [LARGE SCALE ANALYSIS] AT SER-1978</scope>
    <scope>IDENTIFICATION BY MASS SPECTROMETRY [LARGE SCALE ANALYSIS]</scope>
    <source>
        <tissue>Leukemic T-cell</tissue>
    </source>
</reference>
<reference key="27">
    <citation type="journal article" date="2010" name="Sci. Signal.">
        <title>Quantitative phosphoproteomics reveals widespread full phosphorylation site occupancy during mitosis.</title>
        <authorList>
            <person name="Olsen J.V."/>
            <person name="Vermeulen M."/>
            <person name="Santamaria A."/>
            <person name="Kumar C."/>
            <person name="Miller M.L."/>
            <person name="Jensen L.J."/>
            <person name="Gnad F."/>
            <person name="Cox J."/>
            <person name="Jensen T.S."/>
            <person name="Nigg E.A."/>
            <person name="Brunak S."/>
            <person name="Mann M."/>
        </authorList>
    </citation>
    <scope>PHOSPHORYLATION [LARGE SCALE ANALYSIS] AT SER-19; SER-1261; SER-1978; SER-2032 AND SER-2121</scope>
    <scope>IDENTIFICATION BY MASS SPECTROMETRY [LARGE SCALE ANALYSIS]</scope>
    <source>
        <tissue>Cervix carcinoma</tissue>
    </source>
</reference>
<reference key="28">
    <citation type="journal article" date="2011" name="BMC Syst. Biol.">
        <title>Initial characterization of the human central proteome.</title>
        <authorList>
            <person name="Burkard T.R."/>
            <person name="Planyavsky M."/>
            <person name="Kaupe I."/>
            <person name="Breitwieser F.P."/>
            <person name="Buerckstuemmer T."/>
            <person name="Bennett K.L."/>
            <person name="Superti-Furga G."/>
            <person name="Colinge J."/>
        </authorList>
    </citation>
    <scope>IDENTIFICATION BY MASS SPECTROMETRY [LARGE SCALE ANALYSIS]</scope>
</reference>
<reference key="29">
    <citation type="journal article" date="2011" name="J. Cell Sci.">
        <title>Regulation of the NKCC2 ion cotransporter by SPAK-OSR1-dependent and -independent pathways.</title>
        <authorList>
            <person name="Richardson C."/>
            <person name="Sakamoto K."/>
            <person name="de los Heros P."/>
            <person name="Deak M."/>
            <person name="Campbell D.G."/>
            <person name="Prescott A.R."/>
            <person name="Alessi D.R."/>
        </authorList>
    </citation>
    <scope>FUNCTION</scope>
    <scope>CATALYTIC ACTIVITY</scope>
</reference>
<reference key="30">
    <citation type="journal article" date="2011" name="Proc. Natl. Acad. Sci. U.S.A.">
        <title>WNK1 is required for mitosis and abscission.</title>
        <authorList>
            <person name="Tu S.W."/>
            <person name="Bugde A."/>
            <person name="Luby-Phelps K."/>
            <person name="Cobb M.H."/>
        </authorList>
    </citation>
    <scope>FUNCTION</scope>
    <scope>SUBCELLULAR LOCATION</scope>
</reference>
<reference key="31">
    <citation type="journal article" date="2011" name="Sci. Signal.">
        <title>System-wide temporal characterization of the proteome and phosphoproteome of human embryonic stem cell differentiation.</title>
        <authorList>
            <person name="Rigbolt K.T."/>
            <person name="Prokhorova T.A."/>
            <person name="Akimov V."/>
            <person name="Henningsen J."/>
            <person name="Johansen P.T."/>
            <person name="Kratchmarova I."/>
            <person name="Kassem M."/>
            <person name="Mann M."/>
            <person name="Olsen J.V."/>
            <person name="Blagoev B."/>
        </authorList>
    </citation>
    <scope>PHOSPHORYLATION [LARGE SCALE ANALYSIS] AT SER-2027; SER-2029 AND SER-2032</scope>
    <scope>IDENTIFICATION BY MASS SPECTROMETRY [LARGE SCALE ANALYSIS]</scope>
</reference>
<reference key="32">
    <citation type="journal article" date="2012" name="J. Biol. Chem.">
        <title>Interactions with WNK (with no lysine) family members regulate oxidative stress response 1 and ion co-transporter activity.</title>
        <authorList>
            <person name="Sengupta S."/>
            <person name="Tu S.W."/>
            <person name="Wedin K."/>
            <person name="Earnest S."/>
            <person name="Stippec S."/>
            <person name="Luby-Phelps K."/>
            <person name="Cobb M.H."/>
        </authorList>
    </citation>
    <scope>FUNCTION</scope>
    <scope>SUBCELLULAR LOCATION</scope>
    <scope>DOMAIN</scope>
    <scope>MUTAGENESIS OF VAL-318</scope>
</reference>
<reference key="33">
    <citation type="journal article" date="2013" name="Biochem. Biophys. Res. Commun.">
        <title>KLHL2 interacts with and ubiquitinates WNK kinases.</title>
        <authorList>
            <person name="Takahashi D."/>
            <person name="Mori T."/>
            <person name="Wakabayashi M."/>
            <person name="Mori Y."/>
            <person name="Susa K."/>
            <person name="Zeniya M."/>
            <person name="Sohara E."/>
            <person name="Rai T."/>
            <person name="Sasaki S."/>
            <person name="Uchida S."/>
        </authorList>
    </citation>
    <scope>UBIQUITINATION BY KLHL2</scope>
</reference>
<reference key="34">
    <citation type="journal article" date="2013" name="Biochem. J.">
        <title>The CUL3-KLHL3 E3 ligase complex mutated in Gordon's hypertension syndrome interacts with and ubiquitylates WNK isoforms: disease-causing mutations in KLHL3 and WNK4 disrupt interaction.</title>
        <authorList>
            <person name="Ohta A."/>
            <person name="Schumacher F.R."/>
            <person name="Mehellou Y."/>
            <person name="Johnson C."/>
            <person name="Knebel A."/>
            <person name="Macartney T.J."/>
            <person name="Wood N.T."/>
            <person name="Alessi D.R."/>
            <person name="Kurz T."/>
        </authorList>
    </citation>
    <scope>UBIQUITINATION</scope>
</reference>
<reference key="35">
    <citation type="journal article" date="2013" name="J. Proteome Res.">
        <title>Toward a comprehensive characterization of a human cancer cell phosphoproteome.</title>
        <authorList>
            <person name="Zhou H."/>
            <person name="Di Palma S."/>
            <person name="Preisinger C."/>
            <person name="Peng M."/>
            <person name="Polat A.N."/>
            <person name="Heck A.J."/>
            <person name="Mohammed S."/>
        </authorList>
    </citation>
    <scope>PHOSPHORYLATION [LARGE SCALE ANALYSIS] AT SER-19; SER-167; SER-174; SER-1261; SER-2029; SER-2032; SER-2370 AND SER-2372</scope>
    <scope>IDENTIFICATION BY MASS SPECTROMETRY [LARGE SCALE ANALYSIS]</scope>
    <source>
        <tissue>Cervix carcinoma</tissue>
        <tissue>Erythroleukemia</tissue>
    </source>
</reference>
<reference key="36">
    <citation type="journal article" date="2013" name="Proc. Natl. Acad. Sci. U.S.A.">
        <title>Kelch-like 3 and Cullin 3 regulate electrolyte homeostasis via ubiquitination and degradation of WNK4.</title>
        <authorList>
            <person name="Shibata S."/>
            <person name="Zhang J."/>
            <person name="Puthumana J."/>
            <person name="Stone K.L."/>
            <person name="Lifton R.P."/>
        </authorList>
    </citation>
    <scope>UBIQUITINATION</scope>
</reference>
<reference key="37">
    <citation type="journal article" date="2014" name="J. Proteomics">
        <title>An enzyme assisted RP-RPLC approach for in-depth analysis of human liver phosphoproteome.</title>
        <authorList>
            <person name="Bian Y."/>
            <person name="Song C."/>
            <person name="Cheng K."/>
            <person name="Dong M."/>
            <person name="Wang F."/>
            <person name="Huang J."/>
            <person name="Sun D."/>
            <person name="Wang L."/>
            <person name="Ye M."/>
            <person name="Zou H."/>
        </authorList>
    </citation>
    <scope>PHOSPHORYLATION [LARGE SCALE ANALYSIS] AT SER-167; SER-174; SER-1978 AND SER-2027</scope>
    <scope>IDENTIFICATION BY MASS SPECTROMETRY [LARGE SCALE ANALYSIS]</scope>
    <source>
        <tissue>Liver</tissue>
    </source>
</reference>
<reference key="38">
    <citation type="journal article" date="2014" name="Proc. Natl. Acad. Sci. U.S.A.">
        <title>Actions of the protein kinase WNK1 on endothelial cells are differentially mediated by its substrate kinases OSR1 and SPAK.</title>
        <authorList>
            <person name="Dbouk H.A."/>
            <person name="Weil L.M."/>
            <person name="Perera G.K."/>
            <person name="Dellinger M.T."/>
            <person name="Pearson G."/>
            <person name="Brekken R.A."/>
            <person name="Cobb M.H."/>
        </authorList>
    </citation>
    <scope>FUNCTION</scope>
</reference>
<reference key="39">
    <citation type="journal article" date="2015" name="Am. J. Physiol.">
        <title>Generation of WNK1 knockout cell lines by CRISPR/Cas-mediated genome editing.</title>
        <authorList>
            <person name="Roy A."/>
            <person name="Goodman J.H."/>
            <person name="Begum G."/>
            <person name="Donnelly B.F."/>
            <person name="Pittman G."/>
            <person name="Weinman E.J."/>
            <person name="Sun D."/>
            <person name="Subramanya A.R."/>
        </authorList>
    </citation>
    <scope>FUNCTION</scope>
</reference>
<reference key="40">
    <citation type="journal article" date="2016" name="Proc. Natl. Acad. Sci. U.S.A.">
        <title>Multistep regulation of autophagy by WNK1.</title>
        <authorList>
            <person name="Gallolu Kankanamalage S."/>
            <person name="Lee A.Y."/>
            <person name="Wichaidit C."/>
            <person name="Lorente-Rodriguez A."/>
            <person name="Shah A.M."/>
            <person name="Stippec S."/>
            <person name="Whitehurst A.W."/>
            <person name="Cobb M.H."/>
        </authorList>
    </citation>
    <scope>FUNCTION</scope>
    <scope>SUBCELLULAR LOCATION</scope>
    <scope>INTERACTION WITH UVRAG</scope>
</reference>
<reference key="41">
    <citation type="journal article" date="2017" name="Genes Dev.">
        <title>WNK1 kinase and the termination factor PCF11 connect nuclear mRNA export with transcription.</title>
        <authorList>
            <person name="Volanakis A."/>
            <person name="Kamieniarz-Gdula K."/>
            <person name="Schlackow M."/>
            <person name="Proudfoot N.J."/>
        </authorList>
    </citation>
    <scope>FUNCTION</scope>
    <scope>CATALYTIC ACTIVITY</scope>
    <scope>SUBCELLULAR LOCATION</scope>
</reference>
<reference key="42">
    <citation type="journal article" date="2018" name="Proc. Natl. Acad. Sci. U.S.A.">
        <title>OSR1 regulates a subset of inward rectifier potassium channels via a binding motif variant.</title>
        <authorList>
            <person name="Taylor C.A. IV"/>
            <person name="An S.W."/>
            <person name="Kankanamalage S.G."/>
            <person name="Stippec S."/>
            <person name="Earnest S."/>
            <person name="Trivedi A.T."/>
            <person name="Yang J.Z."/>
            <person name="Mirzaei H."/>
            <person name="Huang C.L."/>
            <person name="Cobb M.H."/>
        </authorList>
    </citation>
    <scope>MUTAGENESIS OF GLY-1255 AND ARG-1257</scope>
</reference>
<reference key="43">
    <citation type="journal article" date="2019" name="ACS Omega">
        <title>Investigating phosphorylation-induced conformational changes in WNK1 kinase by molecular dynamics simulations.</title>
        <authorList>
            <person name="Jonniya N.A."/>
            <person name="Sk M.F."/>
            <person name="Kar P."/>
        </authorList>
    </citation>
    <scope>FUNCTION</scope>
    <scope>CATALYTIC ACTIVITY</scope>
    <scope>ACTIVITY REGULATION</scope>
    <scope>PHOSPHORYLATION AT SER-378 AND SER-382</scope>
</reference>
<reference key="44">
    <citation type="journal article" date="2021" name="Cell Rep.">
        <title>Phosphorylated WNK kinase networks in recoded bacteria recapitulate physiological function.</title>
        <authorList>
            <person name="Schiapparelli P."/>
            <person name="Pirman N.L."/>
            <person name="Mohler K."/>
            <person name="Miranda-Herrera P.A."/>
            <person name="Zarco N."/>
            <person name="Kilic O."/>
            <person name="Miller C."/>
            <person name="Shah S.R."/>
            <person name="Rogulina S."/>
            <person name="Hungerford W."/>
            <person name="Abriola L."/>
            <person name="Hoyer D."/>
            <person name="Turk B.E."/>
            <person name="Guerrero-Cazares H."/>
            <person name="Isaacs F.J."/>
            <person name="Quinones-Hinojosa A."/>
            <person name="Levchenko A."/>
            <person name="Rinehart J."/>
        </authorList>
    </citation>
    <scope>FUNCTION</scope>
    <scope>ACTIVITY REGULATION</scope>
    <scope>PHOSPHORYLATION AT SER-382</scope>
</reference>
<reference key="45">
    <citation type="journal article" date="2021" name="Mol. Cell">
        <title>WNK1 is an assembly factor for the human ER membrane protein complex.</title>
        <authorList>
            <person name="Pleiner T."/>
            <person name="Hazu M."/>
            <person name="Tomaleri G.P."/>
            <person name="Januszyk K."/>
            <person name="Oania R.S."/>
            <person name="Sweredoski M.J."/>
            <person name="Moradian A."/>
            <person name="Guna A."/>
            <person name="Voorhees R.M."/>
        </authorList>
    </citation>
    <scope>FUNCTION</scope>
    <scope>INTERACTION WITH EMC2</scope>
    <scope>SUBCELLULAR LOCATION</scope>
    <scope>MUTAGENESIS OF PHE-2246; ASP-2248; ASP-2249; LEU-2250; HIS-2251; LEU-2253; TRP-2257 AND ASP-2260</scope>
</reference>
<reference key="46">
    <citation type="journal article" date="2022" name="Cell">
        <title>WNK kinases sense molecular crowding and rescue cell volume via phase separation.</title>
        <authorList>
            <person name="Boyd-Shiwarski C.R."/>
            <person name="Shiwarski D.J."/>
            <person name="Griffiths S.E."/>
            <person name="Beacham R.T."/>
            <person name="Norrell L."/>
            <person name="Morrison D.E."/>
            <person name="Wang J."/>
            <person name="Mann J."/>
            <person name="Tennant W."/>
            <person name="Anderson E.N."/>
            <person name="Franks J."/>
            <person name="Calderon M."/>
            <person name="Connolly K.A."/>
            <person name="Cheema M.U."/>
            <person name="Weaver C.J."/>
            <person name="Nkashama L.J."/>
            <person name="Weckerly C.C."/>
            <person name="Querry K.E."/>
            <person name="Pandey U.B."/>
            <person name="Donnelly C.J."/>
            <person name="Sun D."/>
            <person name="Rodan A.R."/>
            <person name="Subramanya A.R."/>
        </authorList>
    </citation>
    <scope>FUNCTION</scope>
    <scope>ACTIVITY REGULATION</scope>
    <scope>SUBCELLULAR LOCATION</scope>
    <scope>DOMAIN</scope>
</reference>
<reference key="47">
    <citation type="journal article" date="2022" name="J. Cell Sci.">
        <title>WNK1 is a chloride-stimulated scaffold that regulates mTORC2 activity and ion transport.</title>
        <authorList>
            <person name="Saha B."/>
            <person name="Leite-Dellova D.C.A."/>
            <person name="Demko J."/>
            <person name="Soerensen M.V."/>
            <person name="Takagi E."/>
            <person name="Gleason C.E."/>
            <person name="Shabbir W."/>
            <person name="Pearce D."/>
        </authorList>
    </citation>
    <scope>FUNCTION</scope>
    <scope>INTERACTION WITH SGK1</scope>
    <scope>INTERACTION WITH THE MTORC2 COMPLEX</scope>
    <scope>MUTAGENESIS OF LYS-233</scope>
</reference>
<reference evidence="55" key="48">
    <citation type="journal article" date="2014" name="Sci. Signal.">
        <title>Chloride sensing by WNK1 involves inhibition of autophosphorylation.</title>
        <authorList>
            <person name="Piala A.T."/>
            <person name="Moon T.M."/>
            <person name="Akella R."/>
            <person name="He H."/>
            <person name="Cobb M.H."/>
            <person name="Goldsmith E.J."/>
        </authorList>
    </citation>
    <scope>X-RAY CRYSTALLOGRAPHY (1.84 ANGSTROMS) OF 210-482</scope>
</reference>
<reference evidence="56" key="49">
    <citation type="journal article" date="2016" name="ACS Chem. Biol.">
        <title>Discovery and characterization of allosteric WNK kinase inhibitors.</title>
        <authorList>
            <person name="Yamada K."/>
            <person name="Zhang J.H."/>
            <person name="Xie X."/>
            <person name="Reinhardt J."/>
            <person name="Xie A.Q."/>
            <person name="LaSala D."/>
            <person name="Kohls D."/>
            <person name="Yowe D."/>
            <person name="Burdick D."/>
            <person name="Yoshisue H."/>
            <person name="Wakai H."/>
            <person name="Schmidt I."/>
            <person name="Gunawan J."/>
            <person name="Yasoshima K."/>
            <person name="Yue Q.K."/>
            <person name="Kato M."/>
            <person name="Mogi M."/>
            <person name="Idamakanti N."/>
            <person name="Kreder N."/>
            <person name="Drueckes P."/>
            <person name="Pandey P."/>
            <person name="Kawanami T."/>
            <person name="Huang W."/>
            <person name="Yagi Y.I."/>
            <person name="Deng Z."/>
            <person name="Park H.M."/>
        </authorList>
    </citation>
    <scope>X-RAY CRYSTALLOGRAPHY (2.50 ANGSTROMS) OF 206-483 IN COMPLEX WITH ATP AND ALLOSTERIC INHIBITOR</scope>
</reference>
<reference evidence="57 58" key="50">
    <citation type="journal article" date="2017" name="J. Med. Chem.">
        <title>Optimization of allosteric With-No-Lysine (WNK) kinase inhibitors and efficacy in rodent hypertension models.</title>
        <authorList>
            <person name="Yamada K."/>
            <person name="Levell J."/>
            <person name="Yoon T."/>
            <person name="Kohls D."/>
            <person name="Yowe D."/>
            <person name="Rigel D.F."/>
            <person name="Imase H."/>
            <person name="Yuan J."/>
            <person name="Yasoshima K."/>
            <person name="DiPetrillo K."/>
            <person name="Monovich L."/>
            <person name="Xu L."/>
            <person name="Zhu M."/>
            <person name="Kato M."/>
            <person name="Jain M."/>
            <person name="Idamakanti N."/>
            <person name="Taslimi P."/>
            <person name="Kawanami T."/>
            <person name="Argikar U.A."/>
            <person name="Kunjathoor V."/>
            <person name="Xie X."/>
            <person name="Yagi Y.I."/>
            <person name="Iwaki Y."/>
            <person name="Robinson Z."/>
            <person name="Park H.M."/>
        </authorList>
    </citation>
    <scope>X-RAY CRYSTALLOGRAPHY (2.01 ANGSTROMS) OF 206-483 IN COMPLEX WITH ATP ANALOG AND ALLOSTERIC INHIBITOR</scope>
</reference>
<reference key="51">
    <citation type="journal article" date="2006" name="Science">
        <title>The consensus coding sequences of human breast and colorectal cancers.</title>
        <authorList>
            <person name="Sjoeblom T."/>
            <person name="Jones S."/>
            <person name="Wood L.D."/>
            <person name="Parsons D.W."/>
            <person name="Lin J."/>
            <person name="Barber T.D."/>
            <person name="Mandelker D."/>
            <person name="Leary R.J."/>
            <person name="Ptak J."/>
            <person name="Silliman N."/>
            <person name="Szabo S."/>
            <person name="Buckhaults P."/>
            <person name="Farrell C."/>
            <person name="Meeh P."/>
            <person name="Markowitz S.D."/>
            <person name="Willis J."/>
            <person name="Dawson D."/>
            <person name="Willson J.K.V."/>
            <person name="Gazdar A.F."/>
            <person name="Hartigan J."/>
            <person name="Wu L."/>
            <person name="Liu C."/>
            <person name="Parmigiani G."/>
            <person name="Park B.H."/>
            <person name="Bachman K.E."/>
            <person name="Papadopoulos N."/>
            <person name="Vogelstein B."/>
            <person name="Kinzler K.W."/>
            <person name="Velculescu V.E."/>
        </authorList>
    </citation>
    <scope>VARIANTS [LARGE SCALE ANALYSIS] GLY-1199 AND GLU-1799</scope>
</reference>
<reference key="52">
    <citation type="journal article" date="2007" name="Nature">
        <title>Patterns of somatic mutation in human cancer genomes.</title>
        <authorList>
            <person name="Greenman C."/>
            <person name="Stephens P."/>
            <person name="Smith R."/>
            <person name="Dalgliesh G.L."/>
            <person name="Hunter C."/>
            <person name="Bignell G."/>
            <person name="Davies H."/>
            <person name="Teague J."/>
            <person name="Butler A."/>
            <person name="Stevens C."/>
            <person name="Edkins S."/>
            <person name="O'Meara S."/>
            <person name="Vastrik I."/>
            <person name="Schmidt E.E."/>
            <person name="Avis T."/>
            <person name="Barthorpe S."/>
            <person name="Bhamra G."/>
            <person name="Buck G."/>
            <person name="Choudhury B."/>
            <person name="Clements J."/>
            <person name="Cole J."/>
            <person name="Dicks E."/>
            <person name="Forbes S."/>
            <person name="Gray K."/>
            <person name="Halliday K."/>
            <person name="Harrison R."/>
            <person name="Hills K."/>
            <person name="Hinton J."/>
            <person name="Jenkinson A."/>
            <person name="Jones D."/>
            <person name="Menzies A."/>
            <person name="Mironenko T."/>
            <person name="Perry J."/>
            <person name="Raine K."/>
            <person name="Richardson D."/>
            <person name="Shepherd R."/>
            <person name="Small A."/>
            <person name="Tofts C."/>
            <person name="Varian J."/>
            <person name="Webb T."/>
            <person name="West S."/>
            <person name="Widaa S."/>
            <person name="Yates A."/>
            <person name="Cahill D.P."/>
            <person name="Louis D.N."/>
            <person name="Goldstraw P."/>
            <person name="Nicholson A.G."/>
            <person name="Brasseur F."/>
            <person name="Looijenga L."/>
            <person name="Weber B.L."/>
            <person name="Chiew Y.-E."/>
            <person name="DeFazio A."/>
            <person name="Greaves M.F."/>
            <person name="Green A.R."/>
            <person name="Campbell P."/>
            <person name="Birney E."/>
            <person name="Easton D.F."/>
            <person name="Chenevix-Trench G."/>
            <person name="Tan M.-H."/>
            <person name="Khoo S.K."/>
            <person name="Teh B.T."/>
            <person name="Yuen S.T."/>
            <person name="Leung S.Y."/>
            <person name="Wooster R."/>
            <person name="Futreal P.A."/>
            <person name="Stratton M.R."/>
        </authorList>
    </citation>
    <scope>VARIANTS [LARGE SCALE ANALYSIS] THR-141; VAL-149; GLN-419; THR-509; GLY-527; ILE-665; ALA-674; ARG-823; VAL-1546; GLU-1799; ILE-1808; LEU-1823; HIS-1957; CYS-2190; LEU-2362 AND TRP-2380</scope>
</reference>
<sequence length="2382" mass="250794">MSGGAAEKQSSTPGSLFLSPPAPAPKNGSSSDSSVGEKLGAAAADAVTGRTEEYRRRRHTMDKDSRGAAATTTTTEHRFFRRSVICDSNATALELPGLPLSLPQPSIPAAVPQSAPPEPHREETVTATATSQVAQQPPAAAAPGEQAVAGPAPSTVPSSTSKDRPVSQPSLVGSKEEPPPARSGSGGGSAKEPQEERSQQQDDIEELETKAVGMSNDGRFLKFDIEIGRGSFKTVYKGLDTETTVEVAWCELQDRKLTKSERQRFKEEAEMLKGLQHPNIVRFYDSWESTVKGKKCIVLVTELMTSGTLKTYLKRFKVMKIKVLRSWCRQILKGLQFLHTRTPPIIHRDLKCDNIFITGPTGSVKIGDLGLATLKRASFAKSVIGTPEFMAPEMYEEKYDESVDVYAFGMCMLEMATSEYPYSECQNAAQIYRRVTSGVKPASFDKVAIPEVKEIIEGCIRQNKDERYSIKDLLNHAFFQEETGVRVELAEEDDGEKIAIKLWLRIEDIKKLKGKYKDNEAIEFSFDLERDVPEDVAQEMVESGYVCEGDHKTMAKAIKDRVSLIKRKREQRQLVREEQEKKKQEESSLKQQVEQSSASQTGIKQLPSASTGIPTASTTSASVSTQVEPEEPEADQHQQLQYQQPSISVLSDGTVDSGQGSSVFTESRVSSQQTVSYGSQHEQAHSTGTVPGHIPSTVQAQSQPHGVYPPSSVAQGQSQGQPSSSSLTGVSSSQPIQHPQQQQGIQQTAPPQQTVQYSLSQTSTSSEATTAQPVSQPQAPQVLPQVSAGKQLPVSQPVPTIQGEPQIPVATQPSVVPVHSGAHFLPVGQPLPTPLLPQYPVSQIPISTPHVSTAQTGFSSLPITMAAGITQPLLTLASSATTAAIPGVSTVVPSQLPTLLQPVTQLPSQVHPQLLQPAVQSMGIPANLGQAAEVPLSSGDVLYQGFPPRLPPQYPGDSNIAPSSNVASVCIHSTVLSPPMPTEVLATPGYFPTVVQPYVESNLLVPMGGVGGQVQVSQPGGSLAQAPTTSSQQAVLESTQGVSQVAPAEPVAVAQTQATQPTTLASSVDSAHSDVASGMSDGNENVPSSSGRHEGRTTKRHYRKSVRSRSRHEKTSRPKLRILNVSNKGDRVVECQLETHNRKMVTFKFDLDGDNPEEIATIMVNNDFILAIERESFVDQVREIIEKADEMLSEDVSVEPEGDQGLESLQGKDDYGFSGSQKLEGEFKQPIPASSMPQQIGIPTSSLTQVVHSAGRRFIVSPVPESRLRESKVFPSEITDTVAASTAQSPGMNLSHSASSLSLQQAFSELRRAQMTEGPNTAPPNFSHTGPTFPVVPPFLSSIAGVPTTAAATAPVPATSSPPNDISTSVIQSEVTVPTEEGIAGVATSTGVVTSGGLPIPPVSESPVLSSVVSSITIPAVVSISTTSPSLQVPTSTSEIVVSSTALYPSVTVSATSASAGGSTATPGPKPPAVVSQQAAGSTTVGATLTSVSTTTSFPSTASQLCIQLSSSTSTPTLAETVVVSAHSLDKTSHSSTTGLAFSLSAPSSSSSPGAGVSSYISQPGGLHPLVIPSVIASTPILPQAAGPTSTPLLPQVPSIPPLVQPVANVPAVQQTLIHSQPQPALLPNQPHTHCPEVDSDTQPKAPGIDDIKTLEEKLRSLFSEHSSSGAQHASVSLETSLVIESTVTPGIPTTAVAPSKLLTSTTSTCLPPTNLPLGTVALPVTPVVTPGQVSTPVSTTTSGVKPGTAPSKPPLTKAPVLPVGTELPAGTLPSEQLPPFPGPSLTQSQQPLEDLDAQLRRTLSPEMITVTSAVGPVSMAAPTAITEAGTQPQKGVSQVKEGPVLATSSGAGVFKMGRFQVSVAADGAQKEGKNKSEDAKSVHFESSTSESSVLSSSSPESTLVKPEPNGITIPGISSDVPESAHKTTASEAKSDTGQPTKVGRFQVTTTANKVGRFSVSKTEDKITDTKKEGPVASPPFMDLEQAVLPAVIPKKEKPELSEPSHLNGPSSDPEAAFLSRDVDDGSGSPHSPHQLSSKSLPSQNLSQSLSNSFNSSYMSSDNESDIEDEDLKLELRRLRDKHLKEIQDLQSRQKHEIESLYTKLGKVPPAVIIPPAAPLSGRRRRPTKSKGSKSSRSSSLGNKSPQLSGNLSGQSAASVLHPQQTLHPPGNIPESGQNQLLQPLKPSPSSDNLYSAFTSDGAISVPSLSAPGQGTSSTNTVGATVNSQAAQAQPPAMTSSRKGTFTDDLHKLVDNWARDAMNLSGRRGSKGHMNYEGPGMARKFSAPGQLCISMTSNLGGSAPISAASATSLGHFTKSMCPPQQYGFPATPFGAQWSGTGGPAPQPLGQFQPVGTASLQNFNISNLQKSISNPPGSNLRTT</sequence>